<keyword id="KW-0002">3D-structure</keyword>
<keyword id="KW-0007">Acetylation</keyword>
<keyword id="KW-0025">Alternative splicing</keyword>
<keyword id="KW-0112">Calmodulin-binding</keyword>
<keyword id="KW-1003">Cell membrane</keyword>
<keyword id="KW-0966">Cell projection</keyword>
<keyword id="KW-0989">Craniosynostosis</keyword>
<keyword id="KW-0963">Cytoplasm</keyword>
<keyword id="KW-0225">Disease variant</keyword>
<keyword id="KW-0242">Dwarfism</keyword>
<keyword id="KW-0887">Epilepsy</keyword>
<keyword id="KW-0378">Hydrolase</keyword>
<keyword id="KW-0991">Intellectual disability</keyword>
<keyword id="KW-0408">Iron</keyword>
<keyword id="KW-0472">Membrane</keyword>
<keyword id="KW-0479">Metal-binding</keyword>
<keyword id="KW-0944">Nitration</keyword>
<keyword id="KW-0597">Phosphoprotein</keyword>
<keyword id="KW-0904">Protein phosphatase</keyword>
<keyword id="KW-1267">Proteomics identification</keyword>
<keyword id="KW-1185">Reference proteome</keyword>
<keyword id="KW-0770">Synapse</keyword>
<keyword id="KW-0862">Zinc</keyword>
<reference key="1">
    <citation type="journal article" date="1993" name="Biochim. Biophys. Acta">
        <title>Molecular cloning of a full-length cDNA encoding the catalytic subunit of human calmodulin-dependent protein phosphatase (calcineurin A alpha).</title>
        <authorList>
            <person name="Muramatsu T."/>
            <person name="Kincaid R.L."/>
        </authorList>
    </citation>
    <scope>NUCLEOTIDE SEQUENCE [MRNA] (ISOFORM 1)</scope>
    <source>
        <tissue>Brain</tissue>
    </source>
</reference>
<reference key="2">
    <citation type="journal article" date="2010" name="Subst. Use Misuse">
        <title>Fine mapping of calcineurin (PPP3CA) gene reveals novel alternative splicing patterns, association of 5'UTR trinucleotide repeat with addiction vulnerability, and differential isoform expression in Alzheimer's disease.</title>
        <authorList>
            <person name="Chiocco M.J."/>
            <person name="Zhu X."/>
            <person name="Walther D."/>
            <person name="Pletnikova O."/>
            <person name="Troncoso J.C."/>
            <person name="Uhl G.R."/>
            <person name="Liu Q.R."/>
        </authorList>
    </citation>
    <scope>NUCLEOTIDE SEQUENCE [MRNA] (ISOFORMS 3 AND 4)</scope>
    <scope>ALTERNATIVE SPLICING</scope>
</reference>
<reference key="3">
    <citation type="journal article" date="2011" name="Mol. Vis.">
        <title>Identification of differentially expressed genes in uveal melanoma using suppressive subtractive hybridization.</title>
        <authorList>
            <person name="Landreville S."/>
            <person name="Lupien C.B."/>
            <person name="Vigneault F."/>
            <person name="Gaudreault M."/>
            <person name="Mathieu M."/>
            <person name="Rousseau A.P."/>
            <person name="Guerin S.L."/>
            <person name="Salesse C."/>
        </authorList>
    </citation>
    <scope>NUCLEOTIDE SEQUENCE [MRNA] (ISOFORM 5)</scope>
</reference>
<reference key="4">
    <citation type="journal article" date="2004" name="Nat. Genet.">
        <title>Complete sequencing and characterization of 21,243 full-length human cDNAs.</title>
        <authorList>
            <person name="Ota T."/>
            <person name="Suzuki Y."/>
            <person name="Nishikawa T."/>
            <person name="Otsuki T."/>
            <person name="Sugiyama T."/>
            <person name="Irie R."/>
            <person name="Wakamatsu A."/>
            <person name="Hayashi K."/>
            <person name="Sato H."/>
            <person name="Nagai K."/>
            <person name="Kimura K."/>
            <person name="Makita H."/>
            <person name="Sekine M."/>
            <person name="Obayashi M."/>
            <person name="Nishi T."/>
            <person name="Shibahara T."/>
            <person name="Tanaka T."/>
            <person name="Ishii S."/>
            <person name="Yamamoto J."/>
            <person name="Saito K."/>
            <person name="Kawai Y."/>
            <person name="Isono Y."/>
            <person name="Nakamura Y."/>
            <person name="Nagahari K."/>
            <person name="Murakami K."/>
            <person name="Yasuda T."/>
            <person name="Iwayanagi T."/>
            <person name="Wagatsuma M."/>
            <person name="Shiratori A."/>
            <person name="Sudo H."/>
            <person name="Hosoiri T."/>
            <person name="Kaku Y."/>
            <person name="Kodaira H."/>
            <person name="Kondo H."/>
            <person name="Sugawara M."/>
            <person name="Takahashi M."/>
            <person name="Kanda K."/>
            <person name="Yokoi T."/>
            <person name="Furuya T."/>
            <person name="Kikkawa E."/>
            <person name="Omura Y."/>
            <person name="Abe K."/>
            <person name="Kamihara K."/>
            <person name="Katsuta N."/>
            <person name="Sato K."/>
            <person name="Tanikawa M."/>
            <person name="Yamazaki M."/>
            <person name="Ninomiya K."/>
            <person name="Ishibashi T."/>
            <person name="Yamashita H."/>
            <person name="Murakawa K."/>
            <person name="Fujimori K."/>
            <person name="Tanai H."/>
            <person name="Kimata M."/>
            <person name="Watanabe M."/>
            <person name="Hiraoka S."/>
            <person name="Chiba Y."/>
            <person name="Ishida S."/>
            <person name="Ono Y."/>
            <person name="Takiguchi S."/>
            <person name="Watanabe S."/>
            <person name="Yosida M."/>
            <person name="Hotuta T."/>
            <person name="Kusano J."/>
            <person name="Kanehori K."/>
            <person name="Takahashi-Fujii A."/>
            <person name="Hara H."/>
            <person name="Tanase T.-O."/>
            <person name="Nomura Y."/>
            <person name="Togiya S."/>
            <person name="Komai F."/>
            <person name="Hara R."/>
            <person name="Takeuchi K."/>
            <person name="Arita M."/>
            <person name="Imose N."/>
            <person name="Musashino K."/>
            <person name="Yuuki H."/>
            <person name="Oshima A."/>
            <person name="Sasaki N."/>
            <person name="Aotsuka S."/>
            <person name="Yoshikawa Y."/>
            <person name="Matsunawa H."/>
            <person name="Ichihara T."/>
            <person name="Shiohata N."/>
            <person name="Sano S."/>
            <person name="Moriya S."/>
            <person name="Momiyama H."/>
            <person name="Satoh N."/>
            <person name="Takami S."/>
            <person name="Terashima Y."/>
            <person name="Suzuki O."/>
            <person name="Nakagawa S."/>
            <person name="Senoh A."/>
            <person name="Mizoguchi H."/>
            <person name="Goto Y."/>
            <person name="Shimizu F."/>
            <person name="Wakebe H."/>
            <person name="Hishigaki H."/>
            <person name="Watanabe T."/>
            <person name="Sugiyama A."/>
            <person name="Takemoto M."/>
            <person name="Kawakami B."/>
            <person name="Yamazaki M."/>
            <person name="Watanabe K."/>
            <person name="Kumagai A."/>
            <person name="Itakura S."/>
            <person name="Fukuzumi Y."/>
            <person name="Fujimori Y."/>
            <person name="Komiyama M."/>
            <person name="Tashiro H."/>
            <person name="Tanigami A."/>
            <person name="Fujiwara T."/>
            <person name="Ono T."/>
            <person name="Yamada K."/>
            <person name="Fujii Y."/>
            <person name="Ozaki K."/>
            <person name="Hirao M."/>
            <person name="Ohmori Y."/>
            <person name="Kawabata A."/>
            <person name="Hikiji T."/>
            <person name="Kobatake N."/>
            <person name="Inagaki H."/>
            <person name="Ikema Y."/>
            <person name="Okamoto S."/>
            <person name="Okitani R."/>
            <person name="Kawakami T."/>
            <person name="Noguchi S."/>
            <person name="Itoh T."/>
            <person name="Shigeta K."/>
            <person name="Senba T."/>
            <person name="Matsumura K."/>
            <person name="Nakajima Y."/>
            <person name="Mizuno T."/>
            <person name="Morinaga M."/>
            <person name="Sasaki M."/>
            <person name="Togashi T."/>
            <person name="Oyama M."/>
            <person name="Hata H."/>
            <person name="Watanabe M."/>
            <person name="Komatsu T."/>
            <person name="Mizushima-Sugano J."/>
            <person name="Satoh T."/>
            <person name="Shirai Y."/>
            <person name="Takahashi Y."/>
            <person name="Nakagawa K."/>
            <person name="Okumura K."/>
            <person name="Nagase T."/>
            <person name="Nomura N."/>
            <person name="Kikuchi H."/>
            <person name="Masuho Y."/>
            <person name="Yamashita R."/>
            <person name="Nakai K."/>
            <person name="Yada T."/>
            <person name="Nakamura Y."/>
            <person name="Ohara O."/>
            <person name="Isogai T."/>
            <person name="Sugano S."/>
        </authorList>
    </citation>
    <scope>NUCLEOTIDE SEQUENCE [LARGE SCALE MRNA] (ISOFORM 2)</scope>
    <source>
        <tissue>Brain</tissue>
    </source>
</reference>
<reference key="5">
    <citation type="journal article" date="2007" name="BMC Genomics">
        <title>The full-ORF clone resource of the German cDNA consortium.</title>
        <authorList>
            <person name="Bechtel S."/>
            <person name="Rosenfelder H."/>
            <person name="Duda A."/>
            <person name="Schmidt C.P."/>
            <person name="Ernst U."/>
            <person name="Wellenreuther R."/>
            <person name="Mehrle A."/>
            <person name="Schuster C."/>
            <person name="Bahr A."/>
            <person name="Bloecker H."/>
            <person name="Heubner D."/>
            <person name="Hoerlein A."/>
            <person name="Michel G."/>
            <person name="Wedler H."/>
            <person name="Koehrer K."/>
            <person name="Ottenwaelder B."/>
            <person name="Poustka A."/>
            <person name="Wiemann S."/>
            <person name="Schupp I."/>
        </authorList>
    </citation>
    <scope>NUCLEOTIDE SEQUENCE [LARGE SCALE MRNA] (ISOFORM 1)</scope>
    <source>
        <tissue>Amygdala</tissue>
    </source>
</reference>
<reference key="6">
    <citation type="journal article" date="2008" name="Nat. Methods">
        <title>Human protein factory for converting the transcriptome into an in vitro-expressed proteome.</title>
        <authorList>
            <person name="Goshima N."/>
            <person name="Kawamura Y."/>
            <person name="Fukumoto A."/>
            <person name="Miura A."/>
            <person name="Honma R."/>
            <person name="Satoh R."/>
            <person name="Wakamatsu A."/>
            <person name="Yamamoto J."/>
            <person name="Kimura K."/>
            <person name="Nishikawa T."/>
            <person name="Andoh T."/>
            <person name="Iida Y."/>
            <person name="Ishikawa K."/>
            <person name="Ito E."/>
            <person name="Kagawa N."/>
            <person name="Kaminaga C."/>
            <person name="Kanehori K."/>
            <person name="Kawakami B."/>
            <person name="Kenmochi K."/>
            <person name="Kimura R."/>
            <person name="Kobayashi M."/>
            <person name="Kuroita T."/>
            <person name="Kuwayama H."/>
            <person name="Maruyama Y."/>
            <person name="Matsuo K."/>
            <person name="Minami K."/>
            <person name="Mitsubori M."/>
            <person name="Mori M."/>
            <person name="Morishita R."/>
            <person name="Murase A."/>
            <person name="Nishikawa A."/>
            <person name="Nishikawa S."/>
            <person name="Okamoto T."/>
            <person name="Sakagami N."/>
            <person name="Sakamoto Y."/>
            <person name="Sasaki Y."/>
            <person name="Seki T."/>
            <person name="Sono S."/>
            <person name="Sugiyama A."/>
            <person name="Sumiya T."/>
            <person name="Takayama T."/>
            <person name="Takayama Y."/>
            <person name="Takeda H."/>
            <person name="Togashi T."/>
            <person name="Yahata K."/>
            <person name="Yamada H."/>
            <person name="Yanagisawa Y."/>
            <person name="Endo Y."/>
            <person name="Imamoto F."/>
            <person name="Kisu Y."/>
            <person name="Tanaka S."/>
            <person name="Isogai T."/>
            <person name="Imai J."/>
            <person name="Watanabe S."/>
            <person name="Nomura N."/>
        </authorList>
    </citation>
    <scope>NUCLEOTIDE SEQUENCE [LARGE SCALE MRNA] (ISOFORM 1)</scope>
</reference>
<reference key="7">
    <citation type="journal article" date="2005" name="Nature">
        <title>Generation and annotation of the DNA sequences of human chromosomes 2 and 4.</title>
        <authorList>
            <person name="Hillier L.W."/>
            <person name="Graves T.A."/>
            <person name="Fulton R.S."/>
            <person name="Fulton L.A."/>
            <person name="Pepin K.H."/>
            <person name="Minx P."/>
            <person name="Wagner-McPherson C."/>
            <person name="Layman D."/>
            <person name="Wylie K."/>
            <person name="Sekhon M."/>
            <person name="Becker M.C."/>
            <person name="Fewell G.A."/>
            <person name="Delehaunty K.D."/>
            <person name="Miner T.L."/>
            <person name="Nash W.E."/>
            <person name="Kremitzki C."/>
            <person name="Oddy L."/>
            <person name="Du H."/>
            <person name="Sun H."/>
            <person name="Bradshaw-Cordum H."/>
            <person name="Ali J."/>
            <person name="Carter J."/>
            <person name="Cordes M."/>
            <person name="Harris A."/>
            <person name="Isak A."/>
            <person name="van Brunt A."/>
            <person name="Nguyen C."/>
            <person name="Du F."/>
            <person name="Courtney L."/>
            <person name="Kalicki J."/>
            <person name="Ozersky P."/>
            <person name="Abbott S."/>
            <person name="Armstrong J."/>
            <person name="Belter E.A."/>
            <person name="Caruso L."/>
            <person name="Cedroni M."/>
            <person name="Cotton M."/>
            <person name="Davidson T."/>
            <person name="Desai A."/>
            <person name="Elliott G."/>
            <person name="Erb T."/>
            <person name="Fronick C."/>
            <person name="Gaige T."/>
            <person name="Haakenson W."/>
            <person name="Haglund K."/>
            <person name="Holmes A."/>
            <person name="Harkins R."/>
            <person name="Kim K."/>
            <person name="Kruchowski S.S."/>
            <person name="Strong C.M."/>
            <person name="Grewal N."/>
            <person name="Goyea E."/>
            <person name="Hou S."/>
            <person name="Levy A."/>
            <person name="Martinka S."/>
            <person name="Mead K."/>
            <person name="McLellan M.D."/>
            <person name="Meyer R."/>
            <person name="Randall-Maher J."/>
            <person name="Tomlinson C."/>
            <person name="Dauphin-Kohlberg S."/>
            <person name="Kozlowicz-Reilly A."/>
            <person name="Shah N."/>
            <person name="Swearengen-Shahid S."/>
            <person name="Snider J."/>
            <person name="Strong J.T."/>
            <person name="Thompson J."/>
            <person name="Yoakum M."/>
            <person name="Leonard S."/>
            <person name="Pearman C."/>
            <person name="Trani L."/>
            <person name="Radionenko M."/>
            <person name="Waligorski J.E."/>
            <person name="Wang C."/>
            <person name="Rock S.M."/>
            <person name="Tin-Wollam A.-M."/>
            <person name="Maupin R."/>
            <person name="Latreille P."/>
            <person name="Wendl M.C."/>
            <person name="Yang S.-P."/>
            <person name="Pohl C."/>
            <person name="Wallis J.W."/>
            <person name="Spieth J."/>
            <person name="Bieri T.A."/>
            <person name="Berkowicz N."/>
            <person name="Nelson J.O."/>
            <person name="Osborne J."/>
            <person name="Ding L."/>
            <person name="Meyer R."/>
            <person name="Sabo A."/>
            <person name="Shotland Y."/>
            <person name="Sinha P."/>
            <person name="Wohldmann P.E."/>
            <person name="Cook L.L."/>
            <person name="Hickenbotham M.T."/>
            <person name="Eldred J."/>
            <person name="Williams D."/>
            <person name="Jones T.A."/>
            <person name="She X."/>
            <person name="Ciccarelli F.D."/>
            <person name="Izaurralde E."/>
            <person name="Taylor J."/>
            <person name="Schmutz J."/>
            <person name="Myers R.M."/>
            <person name="Cox D.R."/>
            <person name="Huang X."/>
            <person name="McPherson J.D."/>
            <person name="Mardis E.R."/>
            <person name="Clifton S.W."/>
            <person name="Warren W.C."/>
            <person name="Chinwalla A.T."/>
            <person name="Eddy S.R."/>
            <person name="Marra M.A."/>
            <person name="Ovcharenko I."/>
            <person name="Furey T.S."/>
            <person name="Miller W."/>
            <person name="Eichler E.E."/>
            <person name="Bork P."/>
            <person name="Suyama M."/>
            <person name="Torrents D."/>
            <person name="Waterston R.H."/>
            <person name="Wilson R.K."/>
        </authorList>
    </citation>
    <scope>NUCLEOTIDE SEQUENCE [LARGE SCALE GENOMIC DNA]</scope>
</reference>
<reference key="8">
    <citation type="submission" date="2005-07" db="EMBL/GenBank/DDBJ databases">
        <authorList>
            <person name="Mural R.J."/>
            <person name="Istrail S."/>
            <person name="Sutton G.G."/>
            <person name="Florea L."/>
            <person name="Halpern A.L."/>
            <person name="Mobarry C.M."/>
            <person name="Lippert R."/>
            <person name="Walenz B."/>
            <person name="Shatkay H."/>
            <person name="Dew I."/>
            <person name="Miller J.R."/>
            <person name="Flanigan M.J."/>
            <person name="Edwards N.J."/>
            <person name="Bolanos R."/>
            <person name="Fasulo D."/>
            <person name="Halldorsson B.V."/>
            <person name="Hannenhalli S."/>
            <person name="Turner R."/>
            <person name="Yooseph S."/>
            <person name="Lu F."/>
            <person name="Nusskern D.R."/>
            <person name="Shue B.C."/>
            <person name="Zheng X.H."/>
            <person name="Zhong F."/>
            <person name="Delcher A.L."/>
            <person name="Huson D.H."/>
            <person name="Kravitz S.A."/>
            <person name="Mouchard L."/>
            <person name="Reinert K."/>
            <person name="Remington K.A."/>
            <person name="Clark A.G."/>
            <person name="Waterman M.S."/>
            <person name="Eichler E.E."/>
            <person name="Adams M.D."/>
            <person name="Hunkapiller M.W."/>
            <person name="Myers E.W."/>
            <person name="Venter J.C."/>
        </authorList>
    </citation>
    <scope>NUCLEOTIDE SEQUENCE [LARGE SCALE GENOMIC DNA]</scope>
</reference>
<reference key="9">
    <citation type="journal article" date="2004" name="Genome Res.">
        <title>The status, quality, and expansion of the NIH full-length cDNA project: the Mammalian Gene Collection (MGC).</title>
        <authorList>
            <consortium name="The MGC Project Team"/>
        </authorList>
    </citation>
    <scope>NUCLEOTIDE SEQUENCE [LARGE SCALE MRNA] (ISOFORM 2)</scope>
    <source>
        <tissue>Pancreas</tissue>
    </source>
</reference>
<reference key="10">
    <citation type="journal article" date="2000" name="Proc. Natl. Acad. Sci. U.S.A.">
        <title>Calsarcins, a novel family of sarcomeric calcineurin-binding proteins.</title>
        <authorList>
            <person name="Frey N."/>
            <person name="Richardson J.A."/>
            <person name="Olson E.N."/>
        </authorList>
    </citation>
    <scope>INTERACTION WITH MYOZ1 AND MYOZ2</scope>
</reference>
<reference key="11">
    <citation type="journal article" date="2002" name="J. Biol. Chem.">
        <title>Calsarcin-3, a novel skeletal muscle-specific member of the calsarcin family, interacts with multiple Z-disc proteins.</title>
        <authorList>
            <person name="Frey N."/>
            <person name="Olson E.N."/>
        </authorList>
    </citation>
    <scope>INTERACTION WITH MYOZ3</scope>
</reference>
<reference key="12">
    <citation type="journal article" date="2003" name="Biochem. J.">
        <title>Phosphorylation of calcipressin 1 increases its ability to inhibit calcineurin and decreases calcipressin half-life.</title>
        <authorList>
            <person name="Genesca L."/>
            <person name="Aubareda A."/>
            <person name="Fuentes J.J."/>
            <person name="Estivill X."/>
            <person name="De La Luna S."/>
            <person name="Perez-Riba M."/>
        </authorList>
    </citation>
    <scope>INTERACTION WITH RCAN1</scope>
</reference>
<reference key="13">
    <citation type="journal article" date="2004" name="Cell">
        <title>The CREB coactivator TORC2 functions as a calcium- and cAMP-sensitive coincidence detector.</title>
        <authorList>
            <person name="Screaton R.A."/>
            <person name="Conkright M.D."/>
            <person name="Katoh Y."/>
            <person name="Best J.L."/>
            <person name="Canettieri G."/>
            <person name="Jeffries S."/>
            <person name="Guzman E."/>
            <person name="Niessen S."/>
            <person name="Yates J.R. III"/>
            <person name="Takemori H."/>
            <person name="Okamoto M."/>
            <person name="Montminy M."/>
        </authorList>
    </citation>
    <scope>INTERACTION WITH CRTC2</scope>
</reference>
<reference key="14">
    <citation type="journal article" date="2005" name="J. Biol. Chem.">
        <title>Calcium signal-induced cofilin dephosphorylation is mediated by Slingshot via calcineurin.</title>
        <authorList>
            <person name="Wang Y."/>
            <person name="Shibasaki F."/>
            <person name="Mizuno K."/>
        </authorList>
    </citation>
    <scope>FUNCTION</scope>
    <scope>CATALYTIC ACTIVITY</scope>
</reference>
<reference key="15">
    <citation type="journal article" date="2007" name="Mol. Cell. Biol.">
        <title>Protein kinase A, Ca2+/calmodulin-dependent kinase II, and calcineurin regulate the intracellular trafficking of myopodin between the Z-disc and the nucleus of cardiac myocytes.</title>
        <authorList>
            <person name="Faul C."/>
            <person name="Dhume A."/>
            <person name="Schecter A.D."/>
            <person name="Mundel P."/>
        </authorList>
    </citation>
    <scope>INTERACTION WITH SYNPO2</scope>
</reference>
<reference key="16">
    <citation type="journal article" date="2008" name="Proc. Natl. Acad. Sci. U.S.A.">
        <title>Dephosphorylation by calcineurin regulates translocation of Drp1 to mitochondria.</title>
        <authorList>
            <person name="Cereghetti G.M."/>
            <person name="Stangherlin A."/>
            <person name="Martins de Brito O."/>
            <person name="Chang C.R."/>
            <person name="Blackstone C."/>
            <person name="Bernardi P."/>
            <person name="Scorrano L."/>
        </authorList>
    </citation>
    <scope>FUNCTION</scope>
    <scope>CATALYTIC ACTIVITY</scope>
    <scope>INTERACTION WITH DMN1L</scope>
</reference>
<reference key="17">
    <citation type="journal article" date="2009" name="Biochemistry">
        <title>The proline-rich N-terminal sequence of calcineurin Abeta determines substrate binding.</title>
        <authorList>
            <person name="Kilka S."/>
            <person name="Erdmann F."/>
            <person name="Migdoll A."/>
            <person name="Fischer G."/>
            <person name="Weiwad M."/>
        </authorList>
    </citation>
    <scope>FUNCTION</scope>
    <scope>CATALYTIC ACTIVITY</scope>
    <scope>BIOPHYSICOCHEMICAL PROPERTIES</scope>
    <scope>SUBCELLULAR LOCATION</scope>
</reference>
<reference key="18">
    <citation type="journal article" date="2011" name="BMC Syst. Biol.">
        <title>Initial characterization of the human central proteome.</title>
        <authorList>
            <person name="Burkard T.R."/>
            <person name="Planyavsky M."/>
            <person name="Kaupe I."/>
            <person name="Breitwieser F.P."/>
            <person name="Buerckstuemmer T."/>
            <person name="Bennett K.L."/>
            <person name="Superti-Furga G."/>
            <person name="Colinge J."/>
        </authorList>
    </citation>
    <scope>IDENTIFICATION BY MASS SPECTROMETRY [LARGE SCALE ANALYSIS]</scope>
</reference>
<reference key="19">
    <citation type="journal article" date="2012" name="Proc. Natl. Acad. Sci. U.S.A.">
        <title>N-terminal acetylome analyses and functional insights of the N-terminal acetyltransferase NatB.</title>
        <authorList>
            <person name="Van Damme P."/>
            <person name="Lasa M."/>
            <person name="Polevoda B."/>
            <person name="Gazquez C."/>
            <person name="Elosegui-Artola A."/>
            <person name="Kim D.S."/>
            <person name="De Juan-Pardo E."/>
            <person name="Demeyer K."/>
            <person name="Hole K."/>
            <person name="Larrea E."/>
            <person name="Timmerman E."/>
            <person name="Prieto J."/>
            <person name="Arnesen T."/>
            <person name="Sherman F."/>
            <person name="Gevaert K."/>
            <person name="Aldabe R."/>
        </authorList>
    </citation>
    <scope>ACETYLATION [LARGE SCALE ANALYSIS] AT SER-2</scope>
    <scope>CLEAVAGE OF INITIATOR METHIONINE [LARGE SCALE ANALYSIS]</scope>
    <scope>IDENTIFICATION BY MASS SPECTROMETRY [LARGE SCALE ANALYSIS]</scope>
</reference>
<reference key="20">
    <citation type="journal article" date="2013" name="J. Proteome Res.">
        <title>Toward a comprehensive characterization of a human cancer cell phosphoproteome.</title>
        <authorList>
            <person name="Zhou H."/>
            <person name="Di Palma S."/>
            <person name="Preisinger C."/>
            <person name="Peng M."/>
            <person name="Polat A.N."/>
            <person name="Heck A.J."/>
            <person name="Mohammed S."/>
        </authorList>
    </citation>
    <scope>PHOSPHORYLATION [LARGE SCALE ANALYSIS] AT SER-492</scope>
    <scope>IDENTIFICATION BY MASS SPECTROMETRY [LARGE SCALE ANALYSIS]</scope>
    <source>
        <tissue>Erythroleukemia</tissue>
    </source>
</reference>
<reference key="21">
    <citation type="journal article" date="2017" name="Am. J. Hum. Genet.">
        <title>De Novo Mutations in PPP3CA Cause Severe Neurodevelopmental Disease with Seizures.</title>
        <authorList>
            <person name="Myers C.T."/>
            <person name="Stong N."/>
            <person name="Mountier E.I."/>
            <person name="Helbig K.L."/>
            <person name="Freytag S."/>
            <person name="Sullivan J.E."/>
            <person name="Ben Zeev B."/>
            <person name="Nissenkorn A."/>
            <person name="Tzadok M."/>
            <person name="Heimer G."/>
            <person name="Shinde D.N."/>
            <person name="Rezazadeh A."/>
            <person name="Regan B.M."/>
            <person name="Oliver K.L."/>
            <person name="Ernst M.E."/>
            <person name="Lippa N.C."/>
            <person name="Mulhern M.S."/>
            <person name="Ren Z."/>
            <person name="Poduri A."/>
            <person name="Andrade D.M."/>
            <person name="Bird L.M."/>
            <person name="Bahlo M."/>
            <person name="Berkovic S.F."/>
            <person name="Lowenstein D.H."/>
            <person name="Scheffer I.E."/>
            <person name="Sadleir L.G."/>
            <person name="Goldstein D.B."/>
            <person name="Mefford H.C."/>
            <person name="Heinzen E.L."/>
        </authorList>
    </citation>
    <scope>INVOLVEMENT IN IECEE1</scope>
    <scope>VARIANTS IECEE1 ARG-92; GLN-281; LYS-282; 445-GLN--GLN-521 DEL AND THR-447</scope>
</reference>
<reference key="22">
    <citation type="journal article" date="2017" name="Elife">
        <title>A protein phosphatase network controls the temporal and spatial dynamics of differentiation commitment in human epidermis.</title>
        <authorList>
            <person name="Mishra A."/>
            <person name="Oules B."/>
            <person name="Pisco A.O."/>
            <person name="Ly T."/>
            <person name="Liakath-Ali K."/>
            <person name="Walko G."/>
            <person name="Viswanathan P."/>
            <person name="Tihy M."/>
            <person name="Nijjher J."/>
            <person name="Dunn S.J."/>
            <person name="Lamond A.I."/>
            <person name="Watt F.M."/>
        </authorList>
    </citation>
    <scope>TISSUE SPECIFICITY</scope>
</reference>
<reference key="23">
    <citation type="journal article" date="2017" name="Oncotarget">
        <title>Overexpression of C16orf74 is involved in aggressive pancreatic cancers.</title>
        <authorList>
            <person name="Nakamura T."/>
            <person name="Katagiri T."/>
            <person name="Sato S."/>
            <person name="Kushibiki T."/>
            <person name="Hontani K."/>
            <person name="Tsuchikawa T."/>
            <person name="Hirano S."/>
            <person name="Nakamura Y."/>
        </authorList>
    </citation>
    <scope>INTERACTION WITH C16ORF74</scope>
    <scope>SUBCELLULAR LOCATION</scope>
</reference>
<reference key="24">
    <citation type="journal article" date="2018" name="IScience">
        <title>Mitogenic Signals Stimulate the CREB Coactivator CRTC3 through PP2A Recruitment.</title>
        <authorList>
            <person name="Sonntag T."/>
            <person name="Ostojic J."/>
            <person name="Vaughan J.M."/>
            <person name="Moresco J.J."/>
            <person name="Yoon Y.S."/>
            <person name="Yates J.R. III"/>
            <person name="Montminy M."/>
        </authorList>
    </citation>
    <scope>FUNCTION</scope>
    <scope>INTERACTION WITH CRTC1 AND CRTC2</scope>
</reference>
<reference key="25">
    <citation type="journal article" date="2019" name="Proc. Natl. Acad. Sci. U.S.A.">
        <title>Calcineurin dephosphorylates Kelch-like 3, reversing phosphorylation by angiotensin II and regulating renal electrolyte handling.</title>
        <authorList>
            <person name="Ishizawa K."/>
            <person name="Wang Q."/>
            <person name="Li J."/>
            <person name="Yamazaki O."/>
            <person name="Tamura Y."/>
            <person name="Fujigaki Y."/>
            <person name="Uchida S."/>
            <person name="Lifton R.P."/>
            <person name="Shibata S."/>
        </authorList>
    </citation>
    <scope>FUNCTION</scope>
    <scope>CATALYTIC ACTIVITY</scope>
    <scope>ACTIVITY REGULATION</scope>
</reference>
<reference key="26">
    <citation type="journal article" date="2021" name="Autophagy">
        <title>Coxsackievirus B3 targets TFEB to disrupt lysosomal function.</title>
        <authorList>
            <person name="Mohamud Y."/>
            <person name="Tang H."/>
            <person name="Xue Y.C."/>
            <person name="Liu H."/>
            <person name="Ng C.S."/>
            <person name="Bahreyni A."/>
            <person name="Luo H."/>
        </authorList>
    </citation>
    <scope>FUNCTION</scope>
</reference>
<reference key="27">
    <citation type="journal article" date="2021" name="Proc. Natl. Acad. Sci. U.S.A.">
        <title>SPATA33 localizes calcineurin to the mitochondria and regulates sperm motility in mice.</title>
        <authorList>
            <person name="Miyata H."/>
            <person name="Oura S."/>
            <person name="Morohoshi A."/>
            <person name="Shimada K."/>
            <person name="Mashiko D."/>
            <person name="Oyama Y."/>
            <person name="Kaneda Y."/>
            <person name="Matsumura T."/>
            <person name="Abbasi F."/>
            <person name="Ikawa M."/>
        </authorList>
    </citation>
    <scope>INTERACTION WITH SPATA33</scope>
</reference>
<reference key="28">
    <citation type="journal article" date="1995" name="Nature">
        <title>Crystal structures of human calcineurin and the human FKBP12-FK506-calcineurin complex.</title>
        <authorList>
            <person name="Kissinger C.R."/>
            <person name="Parge H.E."/>
            <person name="Knighton D.R."/>
            <person name="Lewis C.T."/>
            <person name="Pelletier L.A."/>
            <person name="Tempczyk A."/>
            <person name="Kalish V.J."/>
            <person name="Tucker K.D."/>
            <person name="Showalter R.E."/>
            <person name="Moomaw E.W."/>
            <person name="Gastinel L.N."/>
            <person name="Habuka N."/>
            <person name="Chen X."/>
            <person name="Maldonado F."/>
            <person name="Barker J.E."/>
            <person name="Bacquet R."/>
            <person name="Villafranca J.E."/>
        </authorList>
    </citation>
    <scope>X-RAY CRYSTALLOGRAPHY (2.1 ANGSTROMS) IN COMPLEX WITH PPP3R1; IRON AND ZINC</scope>
    <scope>ACTIVE SITE</scope>
</reference>
<reference key="29">
    <citation type="journal article" date="2002" name="Proc. Natl. Acad. Sci. U.S.A.">
        <title>Crystal structure of calcineurin-cyclophilin-cyclosporin shows common but distinct recognition of immunophilin-drug complexes.</title>
        <authorList>
            <person name="Huai Q."/>
            <person name="Kim H.Y."/>
            <person name="Liu Y."/>
            <person name="Zhao Y."/>
            <person name="Mondragon A."/>
            <person name="Liu J.O."/>
            <person name="Ke H."/>
        </authorList>
    </citation>
    <scope>X-RAY CRYSTALLOGRAPHY (2.80 ANGSTROMS) OF 1-372 IN COMPLEX WITH PPIA; PPP3R1; IRON AND ZINC</scope>
</reference>
<reference key="30">
    <citation type="journal article" date="2002" name="Proc. Natl. Acad. Sci. U.S.A.">
        <title>Crystal structure of human calcineurin complexed with cyclosporin A and human cyclophilin.</title>
        <authorList>
            <person name="Jin L."/>
            <person name="Harrison S.C."/>
        </authorList>
    </citation>
    <scope>X-RAY CRYSTALLOGRAPHY (3.10 ANGSTROMS) OF 20-392 IN COMPLEX WITH PPIA AND PPP3R1</scope>
</reference>
<reference key="31">
    <citation type="journal article" date="2007" name="J. Mol. Biol.">
        <title>Structure of calcineurin in complex with PVIVIT peptide: portrait of a low-affinity signalling interaction.</title>
        <authorList>
            <person name="Li H."/>
            <person name="Zhang L."/>
            <person name="Rao A."/>
            <person name="Harrison S.C."/>
            <person name="Hogan P.G."/>
        </authorList>
    </citation>
    <scope>X-RAY CRYSTALLOGRAPHY (2.3 ANGSTROMS) OF 1-380 IN COMPLEX WITH SUBSTRATE PEPTIDE; PPP3R1; IRON AND ZINC</scope>
    <scope>FUNCTION</scope>
</reference>
<reference key="32">
    <citation type="journal article" date="2007" name="Structure">
        <title>Structure of the calcineurin-NFAT complex: defining a T cell activation switch using solution NMR and crystal coordinates.</title>
        <authorList>
            <person name="Takeuchi K."/>
            <person name="Roehrl M.H."/>
            <person name="Sun Z.Y."/>
            <person name="Wagner G."/>
        </authorList>
    </citation>
    <scope>STRUCTURE BY NMR OF 21-347 IN COMPLEX WITH PEPTIDE SUBSTRATE</scope>
    <scope>FUNCTION</scope>
</reference>
<reference key="33">
    <citation type="journal article" date="2008" name="Proteins">
        <title>The complex structure of calmodulin bound to a calcineurin peptide.</title>
        <authorList>
            <person name="Ye Q."/>
            <person name="Wang H."/>
            <person name="Zheng J."/>
            <person name="Wei Q."/>
            <person name="Jia Z."/>
        </authorList>
    </citation>
    <scope>X-RAY CRYSTALLOGRAPHY (1.86 ANGSTROMS) OF 389-413 IN COMPLEX WITH CALM1</scope>
</reference>
<reference key="34">
    <citation type="submission" date="2008-01" db="PDB data bank">
        <title>Structure of Calmodulin complexed with the Calmodulin Binding Domain of Calcineurin.</title>
        <authorList>
            <person name="Chyan C."/>
            <person name="Huang J."/>
            <person name="Irene D."/>
            <person name="Lin T."/>
        </authorList>
    </citation>
    <scope>STRUCTURE BY NMR OF 391-414 IN COMPLEX WITH CALM1</scope>
</reference>
<reference key="35">
    <citation type="journal article" date="2009" name="PLoS ONE">
        <title>Domain swapping and different oligomeric States for the complex between calmodulin and the calmodulin-binding domain of calcineurin a.</title>
        <authorList>
            <person name="Majava V."/>
            <person name="Kursula P."/>
        </authorList>
    </citation>
    <scope>X-RAY CRYSTALLOGRAPHY (1.45 ANGSTROMS) OF 395-411 IN COMPLEX WITH CALM1</scope>
</reference>
<reference key="36">
    <citation type="journal article" date="2012" name="Nat. Struct. Mol. Biol.">
        <title>Balanced interactions of calcineurin with AKAP79 regulate Ca2+-calcineurin-NFAT signaling.</title>
        <authorList>
            <person name="Li H."/>
            <person name="Pink M.D."/>
            <person name="Murphy J.G."/>
            <person name="Stein A."/>
            <person name="Dell'Acqua M.L."/>
            <person name="Hogan P.G."/>
        </authorList>
    </citation>
    <scope>X-RAY CRYSTALLOGRAPHY (2.00 ANGSTROMS) OF 14-370 IN COMPLEX WITH PPP3R1; AKAP5 PEPTIDE; IRON AND ZINC</scope>
    <scope>FUNCTION</scope>
    <scope>SUBCELLULAR LOCATION</scope>
</reference>
<reference key="37">
    <citation type="journal article" date="2013" name="PLoS Biol.">
        <title>The molecular mechanism of substrate engagement and immunosuppressant inhibition of calcineurin.</title>
        <authorList>
            <person name="Grigoriu S."/>
            <person name="Bond R."/>
            <person name="Cossio P."/>
            <person name="Chen J.A."/>
            <person name="Ly N."/>
            <person name="Hummer G."/>
            <person name="Page R."/>
            <person name="Cyert M.S."/>
            <person name="Peti W."/>
        </authorList>
    </citation>
    <scope>X-RAY CRYSTALLOGRAPHY (1.70 ANGSTROMS) OF 1-370 IN COMPLEX WITH PPP3R1 AND AFRICAN SWINE FEVER VIRUS MAL-047/A238L</scope>
    <scope>FUNCTION</scope>
    <scope>CATALYTIC ACTIVITY</scope>
</reference>
<reference key="38">
    <citation type="journal article" date="2014" name="Biochemistry">
        <title>Stoichiometry of the calcineurin regulatory domain-calmodulin complex.</title>
        <authorList>
            <person name="Dunlap T.B."/>
            <person name="Guo H.F."/>
            <person name="Cook E.C."/>
            <person name="Holbrook E."/>
            <person name="Rumi-Masante J."/>
            <person name="Lester T.E."/>
            <person name="Colbert C.L."/>
            <person name="Vander Kooi C.W."/>
            <person name="Creamer T.P."/>
        </authorList>
    </citation>
    <scope>X-RAY CRYSTALLOGRAPHY (1.95 ANGSTROMS) OF 391-414 IN COMPLEX WITH CALM1</scope>
</reference>
<reference key="39">
    <citation type="journal article" date="2015" name="PLoS ONE">
        <title>Calcineurin Undergoes a Conformational Switch Evoked via Peptidyl-Prolyl Isomerization.</title>
        <authorList>
            <person name="Guasch A."/>
            <person name="Aranguren-Ibanez A."/>
            <person name="Perez-Luque R."/>
            <person name="Aparicio D."/>
            <person name="Martinez-Hoyer S."/>
            <person name="Mulero M.C."/>
            <person name="Serrano-Candelas E."/>
            <person name="Perez-Riba M."/>
            <person name="Fita I."/>
        </authorList>
    </citation>
    <scope>X-RAY CRYSTALLOGRAPHY (3.35 ANGSTROMS) OF 2-346 IN COMPLEX WITH IRON AND ZINC</scope>
    <scope>FUNCTION</scope>
    <scope>CATALYTIC ACTIVITY</scope>
    <scope>ACTIVITY REGULATION</scope>
    <scope>INTERACTION WITH RCAN3 AND NFATC2</scope>
    <scope>MOTIF</scope>
    <scope>MUTAGENESIS OF TYR-288; TYR-341 AND 328-VAL--ARG-332</scope>
</reference>
<reference key="40">
    <citation type="journal article" date="2016" name="Sci. Rep.">
        <title>Investigating the human Calcineurin Interaction Network using the piLxVP SLiM.</title>
        <authorList>
            <person name="Sheftic S.R."/>
            <person name="Page R."/>
            <person name="Peti W."/>
        </authorList>
    </citation>
    <scope>X-RAY CRYSTALLOGRAPHY (2.60 ANGSTROMS) OF 1-370 IN COMPLEX WITH PPP3R1; PEPTIDE SUBSTRATE; IRON AND ZINC</scope>
    <scope>FUNCTION</scope>
</reference>
<reference evidence="53 54 55" key="41">
    <citation type="journal article" date="2019" name="Nat. Commun.">
        <title>Molecular basis for the binding and selective dephosphorylation of Na+/H+ exchanger 1 by calcineurin.</title>
        <authorList>
            <person name="Hendus-Altenburger R."/>
            <person name="Wang X."/>
            <person name="Sjogaard-Frich L.M."/>
            <person name="Pedraz-Cuesta E."/>
            <person name="Sheftic S.R."/>
            <person name="Bendsoe A.H."/>
            <person name="Page R."/>
            <person name="Kragelund B.B."/>
            <person name="Pedersen S.F."/>
            <person name="Peti W."/>
        </authorList>
    </citation>
    <scope>X-RAY CRYSTALLOGRAPHY (1.90 ANGSTROMS) OF 679-723 IN COMPLEX WITH SLC9A1; PPP3R1; IRON AND ZINC</scope>
    <scope>FUNCTION</scope>
    <scope>CATALYTIC ACTIVITY</scope>
</reference>
<reference key="42">
    <citation type="journal article" date="2018" name="Hum. Mol. Genet.">
        <title>Loss-of-function and gain-of-function mutations in PPP3CA cause two distinct disorders.</title>
        <authorList>
            <person name="Mizuguchi T."/>
            <person name="Nakashima M."/>
            <person name="Kato M."/>
            <person name="Okamoto N."/>
            <person name="Kurahashi H."/>
            <person name="Ekhilevitch N."/>
            <person name="Shiina M."/>
            <person name="Nishimura G."/>
            <person name="Shibata T."/>
            <person name="Matsuo M."/>
            <person name="Ikeda T."/>
            <person name="Ogata K."/>
            <person name="Tsuchida N."/>
            <person name="Mitsuhashi S."/>
            <person name="Miyatake S."/>
            <person name="Takata A."/>
            <person name="Miyake N."/>
            <person name="Hata K."/>
            <person name="Kaname T."/>
            <person name="Matsubara Y."/>
            <person name="Saitsu H."/>
            <person name="Matsumoto N."/>
        </authorList>
    </citation>
    <scope>VARIANTS ACCIID LEU-470 AND THR-473</scope>
    <scope>INVOLVEMENT IN ACCIID</scope>
    <scope>VARIANTS IECEE1 ARG-92; ILE-150 AND GLU-234</scope>
</reference>
<reference key="43">
    <citation type="journal article" date="2019" name="Eur. J. Hum. Genet.">
        <title>Novel calcineurin A (PPP3CA) variant associated with epilepsy, constitutive enzyme activation and downregulation of protein expression.</title>
        <authorList>
            <person name="Rydzanicz M."/>
            <person name="Wachowska M."/>
            <person name="Cook E.C."/>
            <person name="Lisowski P."/>
            <person name="Kuzniewska B."/>
            <person name="Szymanska K."/>
            <person name="Diecke S."/>
            <person name="Prigione A."/>
            <person name="Szczaluba K."/>
            <person name="Szybinska A."/>
            <person name="Koppolu A."/>
            <person name="Murcia Pienkowski V."/>
            <person name="Kosinska J."/>
            <person name="Wiweger M."/>
            <person name="Kostrzewa G."/>
            <person name="Brzozowska M."/>
            <person name="Domanska-Pakiela D."/>
            <person name="Jurkiewicz E."/>
            <person name="Stawinski P."/>
            <person name="Gromadka A."/>
            <person name="Zielenkiewicz P."/>
            <person name="Demkow U."/>
            <person name="Dziembowska M."/>
            <person name="Kuznicki J."/>
            <person name="Creamer T.P."/>
            <person name="Ploski R."/>
        </authorList>
    </citation>
    <scope>VARIANT IECEE1 442-GLN--GLN-521 DEL</scope>
    <scope>CHARACTERIZATION OF VARIANT IECEE1 442-GLN--GLN-521 DEL</scope>
    <scope>FUNCTION</scope>
    <scope>TISSUE SPECIFICITY</scope>
</reference>
<comment type="function">
    <text evidence="2 3 4 12 13 14 17 18 20 21 23 24 29 30 31 32 33">Calcium-dependent, calmodulin-stimulated protein phosphatase which plays an essential role in the transduction of intracellular Ca(2+)-mediated signals (PubMed:15671020, PubMed:18838687, PubMed:19154138, PubMed:23468591, PubMed:30254215). Many of the substrates contain a PxIxIT motif and/or a LxVP motif (PubMed:17498738, PubMed:17502104, PubMed:22343722, PubMed:23468591, PubMed:27974827). In response to increased Ca(2+) levels, dephosphorylates and activates phosphatase SSH1 which results in cofilin dephosphorylation (PubMed:15671020). In response to increased Ca(2+) levels following mitochondrial depolarization, dephosphorylates DNM1L inducing DNM1L translocation to the mitochondrion (PubMed:18838687). Positively regulates the CACNA1B/CAV2.2-mediated Ca(2+) release probability at hippocampal neuronal soma and synaptic terminals (By similarity). Dephosphorylates heat shock protein HSPB1 (By similarity). Dephosphorylates and activates transcription factor NFATC1 (PubMed:19154138). In response to increased Ca(2+) levels, regulates NFAT-mediated transcription probably by dephosphorylating NFAT and promoting its nuclear translocation (PubMed:26248042). Dephosphorylates and inactivates transcription factor ELK1 (PubMed:19154138). Dephosphorylates DARPP32 (PubMed:19154138). May dephosphorylate CRTC2 at 'Ser-171' resulting in CRTC2 dissociation from 14-3-3 proteins (PubMed:30611118). Dephosphorylates transcription factor TFEB at 'Ser-211' following Coxsackievirus B3 infection, promoting nuclear translocation (PubMed:33691586). Required for postnatal development of the nephrogenic zone and superficial glomeruli in the kidneys, cell cycle homeostasis in the nephrogenic zone, and ultimately normal kidney function (By similarity). Plays a role in intracellular AQP2 processing and localization to the apical membrane in the kidney, may thereby be required for efficient kidney filtration (By similarity). Required for secretion of salivary enzymes amylase, peroxidase, lysozyme and sialic acid via formation of secretory vesicles in the submandibular glands (By similarity). Required for calcineurin activity and homosynaptic depotentiation in the hippocampus (By similarity). Required for normal differentiation and survival of keratinocytes and therefore required for epidermis superstructure formation (By similarity). Positively regulates osteoblastic bone formation, via promotion of osteoblast differentiation (By similarity). Positively regulates osteoclast differentiation, potentially via NFATC1 signaling (By similarity). May play a role in skeletal muscle fiber type specification, potentially via NFATC1 signaling (By similarity). Negatively regulates MAP3K14/NIK signaling via inhibition of nuclear translocation of the transcription factors RELA and RELB (By similarity). Required for antigen-specific T-cell proliferation response (By similarity). Dephosphorylates KLHL3, promoting the interaction between KLHL3 and WNK4 and subsequent degradation of WNK4 (PubMed:30718414). Negatively regulates SLC9A1 activity (PubMed:31375679).</text>
</comment>
<comment type="catalytic activity">
    <reaction evidence="12 17 18 21 43 44">
        <text>O-phospho-L-seryl-[protein] + H2O = L-seryl-[protein] + phosphate</text>
        <dbReference type="Rhea" id="RHEA:20629"/>
        <dbReference type="Rhea" id="RHEA-COMP:9863"/>
        <dbReference type="Rhea" id="RHEA-COMP:11604"/>
        <dbReference type="ChEBI" id="CHEBI:15377"/>
        <dbReference type="ChEBI" id="CHEBI:29999"/>
        <dbReference type="ChEBI" id="CHEBI:43474"/>
        <dbReference type="ChEBI" id="CHEBI:83421"/>
        <dbReference type="EC" id="3.1.3.16"/>
    </reaction>
</comment>
<comment type="catalytic activity">
    <reaction evidence="12 17 18 21 32 43">
        <text>O-phospho-L-threonyl-[protein] + H2O = L-threonyl-[protein] + phosphate</text>
        <dbReference type="Rhea" id="RHEA:47004"/>
        <dbReference type="Rhea" id="RHEA-COMP:11060"/>
        <dbReference type="Rhea" id="RHEA-COMP:11605"/>
        <dbReference type="ChEBI" id="CHEBI:15377"/>
        <dbReference type="ChEBI" id="CHEBI:30013"/>
        <dbReference type="ChEBI" id="CHEBI:43474"/>
        <dbReference type="ChEBI" id="CHEBI:61977"/>
        <dbReference type="EC" id="3.1.3.16"/>
    </reaction>
</comment>
<comment type="cofactor">
    <cofactor evidence="8 13 20 23 24 35">
        <name>Fe(3+)</name>
        <dbReference type="ChEBI" id="CHEBI:29034"/>
    </cofactor>
    <text evidence="8 13 20 23 24 35">Binds 1 Fe(3+) ion per subunit.</text>
</comment>
<comment type="cofactor">
    <cofactor evidence="8 13 20 23 24 35">
        <name>Zn(2+)</name>
        <dbReference type="ChEBI" id="CHEBI:29105"/>
    </cofactor>
    <text evidence="8 13 20 23 24 35">Binds 1 zinc ion per subunit.</text>
</comment>
<comment type="activity regulation">
    <text evidence="1 23 31">Activated by Ca(2+)-bound calmodulin following an increase in intracellular Ca(2+). At low Ca(2+) concentrations, the catalytic subunit (also known as calcineurin A) is inactive and is bound to the regulatory subunit (also known as calcineurin B) in which only two high-affinity binding sites are occupied by Ca(2+). In response to elevated calcium levels, the occupancy of the low-affinity sites on calcineurin B by Ca(2+) causes a conformational change of the C-terminal regulatory domain of calcineurin A, resulting in the exposure of the calmodulin-binding domain and in the partial activation of calcineurin A. The subsequent binding of Ca(2+)-bound calmodulin leads to the displacement of the autoinhibitory domain from the active site and possibly of the autoinhibitory segment from the substrate binding site which fully activates calcineurin A. Inhibited by immunosuppressant drug FK506 (tacrolimus) in complex with FKBP12 and also by immunosuppressant drug cyclosporin A (CsA) in complex with PPIA/cyclophilin A; the inhibition is Ca(2+)-dependent (PubMed:26248042, PubMed:30718414).</text>
</comment>
<comment type="biophysicochemical properties">
    <kinetics>
        <KM evidence="18">2.04 uM for NFATC1</KM>
        <KM evidence="18">2.22 uM for DARPP32</KM>
    </kinetics>
</comment>
<comment type="subunit">
    <text evidence="2 3 4 6 7 8 9 10 11 13 15 16 17 19 20 21 22 23 24 25 30 34 35 36">Forms a complex composed of a calmodulin-dependent catalytic subunit (also known as calcineurin A) and a regulatory Ca(2+)-binding subunit (also known as calcineurin B) (PubMed:12218175, PubMed:12357034, PubMed:17498738, PubMed:22343722, PubMed:23468591, PubMed:27974827, PubMed:8524402). There are three catalytic subunits, each encoded by a separate gene (PPP3CA, PPP3CB, and PPP3CC) and two regulatory subunits which are also encoded by separate genes (PPP3R1 and PPP3R2). In response to an increase in Ca(2+) intracellular levels, forms a complex composed of PPP3CA/calcineurin A, calcineurin B and calmodulin (By similarity). Interacts (via calcineurin B binding domain) with regulatory subunit PPP3R1/calcineurin B (PubMed:12218175, PubMed:12357034, PubMed:17498738, PubMed:22343722, PubMed:23468591, PubMed:27974827, PubMed:8524402). Interacts (via calmodulin-binding domain) with CALM1/calmodulin; the interaction depends on calmodulin binding to Ca(2+) (PubMed:18384083, PubMed:19404396, PubMed:25144868, Ref.34). Forms a complex composed of MYOZ2 and ACTN1 (By similarity). Within the complex interacts with MYOZ2 (PubMed:11114196). Interacts with MYOZ1 (PubMed:11114196). Interacts with MYOZ3 (PubMed:11842093). Interacts with CIB1; the interaction increases upon cardiomyocyte hypertrophy (By similarity). Interacts with CHP1 and CHP2 (By similarity). Interacts with CRTC1 (PubMed:30611118). Interacts with CRTC2 (PubMed:15454081, PubMed:30611118). Interacts with DNM1L; the interaction dephosphorylates DNM1L and promotes its translocation to mitochondria (PubMed:18838687). Interacts with CMYA5; this interaction represses calcineurin activity in muscle (By similarity). Interacts (constitutively active form) with SYNPO2 (PubMed:17923693). Interacts with scaffold protein AKAP5 (via IAIIIT motif); the interaction recruits PPP3CA to the plasma membrane following L-type Ca(2+)-channel activation (PubMed:22343722). Interacts with NFATC2 (PubMed:26248042). Interacts with RCAN3 (PubMed:26248042). Interacts with PPIA (PubMed:12218175, PubMed:12357034). Interacts with RCAN1 (PubMed:12809556). Interacts with UNC119 (By similarity). Interacts with C16orf74 (via PxIxIT motif, when phosphorylated on 'Thr-44') (PubMed:28881575). Interacts (via N-terminus) with MAP3K14/NIK (via C-terminus and kinase domain) (By similarity). Interacts with TRAF3 (By similarity). Interacts with SPATA33 (via PQIIIT motif) (PubMed:34446558).</text>
</comment>
<comment type="interaction">
    <interactant intactId="EBI-352922">
        <id>Q08209</id>
    </interactant>
    <interactant intactId="EBI-745814">
        <id>Q96GX8</id>
        <label>C16orf74</label>
    </interactant>
    <organismsDiffer>false</organismsDiffer>
    <experiments>4</experiments>
</comment>
<comment type="interaction">
    <interactant intactId="EBI-352922">
        <id>Q08209</id>
    </interactant>
    <interactant intactId="EBI-401755">
        <id>P62993</id>
        <label>GRB2</label>
    </interactant>
    <organismsDiffer>false</organismsDiffer>
    <experiments>3</experiments>
</comment>
<comment type="interaction">
    <interactant intactId="EBI-352922">
        <id>Q08209</id>
    </interactant>
    <interactant intactId="EBI-915984">
        <id>P63098</id>
        <label>PPP3R1</label>
    </interactant>
    <organismsDiffer>false</organismsDiffer>
    <experiments>11</experiments>
</comment>
<comment type="interaction">
    <interactant intactId="EBI-352922">
        <id>Q08209</id>
    </interactant>
    <interactant intactId="EBI-1048016">
        <id>P54578</id>
        <label>USP14</label>
    </interactant>
    <organismsDiffer>false</organismsDiffer>
    <experiments>3</experiments>
</comment>
<comment type="interaction">
    <interactant intactId="EBI-352922">
        <id>Q08209</id>
    </interactant>
    <interactant intactId="EBI-9086576">
        <id>Q8VHW5</id>
        <label>Cacng8</label>
    </interactant>
    <organismsDiffer>true</organismsDiffer>
    <experiments>2</experiments>
</comment>
<comment type="interaction">
    <interactant intactId="EBI-15637215">
        <id>Q08209-1</id>
    </interactant>
    <interactant intactId="EBI-703640">
        <id>P24588</id>
        <label>AKAP5</label>
    </interactant>
    <organismsDiffer>false</organismsDiffer>
    <experiments>6</experiments>
</comment>
<comment type="interaction">
    <interactant intactId="EBI-15637215">
        <id>Q08209-1</id>
    </interactant>
    <interactant intactId="EBI-6907210">
        <id>O95644</id>
        <label>NFATC1</label>
    </interactant>
    <organismsDiffer>false</organismsDiffer>
    <experiments>4</experiments>
</comment>
<comment type="interaction">
    <interactant intactId="EBI-15637215">
        <id>Q08209-1</id>
    </interactant>
    <interactant intactId="EBI-716258">
        <id>Q13469</id>
        <label>NFATC2</label>
    </interactant>
    <organismsDiffer>false</organismsDiffer>
    <experiments>2</experiments>
</comment>
<comment type="interaction">
    <interactant intactId="EBI-15637215">
        <id>Q08209-1</id>
    </interactant>
    <interactant intactId="EBI-915984">
        <id>P63098</id>
        <label>PPP3R1</label>
    </interactant>
    <organismsDiffer>false</organismsDiffer>
    <experiments>7</experiments>
</comment>
<comment type="interaction">
    <interactant intactId="EBI-15637215">
        <id>Q08209-1</id>
    </interactant>
    <interactant intactId="EBI-295856">
        <id>P46939</id>
        <label>UTRN</label>
    </interactant>
    <organismsDiffer>false</organismsDiffer>
    <experiments>3</experiments>
</comment>
<comment type="interaction">
    <interactant intactId="EBI-15637215">
        <id>Q08209-1</id>
    </interactant>
    <interactant intactId="EBI-16039701">
        <id>O36972</id>
        <label>A238L</label>
    </interactant>
    <organismsDiffer>true</organismsDiffer>
    <experiments>2</experiments>
</comment>
<comment type="interaction">
    <interactant intactId="EBI-11959013">
        <id>Q08209-2</id>
    </interactant>
    <interactant intactId="EBI-11096309">
        <id>Q9NYB9-2</id>
        <label>ABI2</label>
    </interactant>
    <organismsDiffer>false</organismsDiffer>
    <experiments>3</experiments>
</comment>
<comment type="interaction">
    <interactant intactId="EBI-11959013">
        <id>Q08209-2</id>
    </interactant>
    <interactant intactId="EBI-703640">
        <id>P24588</id>
        <label>AKAP5</label>
    </interactant>
    <organismsDiffer>false</organismsDiffer>
    <experiments>3</experiments>
</comment>
<comment type="interaction">
    <interactant intactId="EBI-11959013">
        <id>Q08209-2</id>
    </interactant>
    <interactant intactId="EBI-7121510">
        <id>P49418</id>
        <label>AMPH</label>
    </interactant>
    <organismsDiffer>false</organismsDiffer>
    <experiments>3</experiments>
</comment>
<comment type="interaction">
    <interactant intactId="EBI-11959013">
        <id>Q08209-2</id>
    </interactant>
    <interactant intactId="EBI-1046033">
        <id>Q9H993</id>
        <label>ARMT1</label>
    </interactant>
    <organismsDiffer>false</organismsDiffer>
    <experiments>4</experiments>
</comment>
<comment type="interaction">
    <interactant intactId="EBI-11959013">
        <id>Q08209-2</id>
    </interactant>
    <interactant intactId="EBI-745814">
        <id>Q96GX8</id>
        <label>C16orf74</label>
    </interactant>
    <organismsDiffer>false</organismsDiffer>
    <experiments>3</experiments>
</comment>
<comment type="interaction">
    <interactant intactId="EBI-11959013">
        <id>Q08209-2</id>
    </interactant>
    <interactant intactId="EBI-10290462">
        <id>Q96KS9</id>
        <label>FAM167A</label>
    </interactant>
    <organismsDiffer>false</organismsDiffer>
    <experiments>3</experiments>
</comment>
<comment type="interaction">
    <interactant intactId="EBI-11959013">
        <id>Q08209-2</id>
    </interactant>
    <interactant intactId="EBI-751388">
        <id>P27987</id>
        <label>ITPKB</label>
    </interactant>
    <organismsDiffer>false</organismsDiffer>
    <experiments>3</experiments>
</comment>
<comment type="interaction">
    <interactant intactId="EBI-11959013">
        <id>Q08209-2</id>
    </interactant>
    <interactant intactId="EBI-915984">
        <id>P63098</id>
        <label>PPP3R1</label>
    </interactant>
    <organismsDiffer>false</organismsDiffer>
    <experiments>13</experiments>
</comment>
<comment type="interaction">
    <interactant intactId="EBI-11959013">
        <id>Q08209-2</id>
    </interactant>
    <interactant intactId="EBI-11959011">
        <id>Q9UPX8-4</id>
        <label>SHANK2</label>
    </interactant>
    <organismsDiffer>false</organismsDiffer>
    <experiments>3</experiments>
</comment>
<comment type="interaction">
    <interactant intactId="EBI-11959013">
        <id>Q08209-2</id>
    </interactant>
    <interactant intactId="EBI-990792">
        <id>P00441</id>
        <label>SOD1</label>
    </interactant>
    <organismsDiffer>false</organismsDiffer>
    <experiments>3</experiments>
</comment>
<comment type="interaction">
    <interactant intactId="EBI-11959013">
        <id>Q08209-2</id>
    </interactant>
    <interactant intactId="EBI-7543499">
        <id>Q8IZW8</id>
        <label>TNS4</label>
    </interactant>
    <organismsDiffer>false</organismsDiffer>
    <experiments>5</experiments>
</comment>
<comment type="interaction">
    <interactant intactId="EBI-11959013">
        <id>Q08209-2</id>
    </interactant>
    <interactant intactId="EBI-2341648">
        <id>Q6ZMU5</id>
        <label>TRIM72</label>
    </interactant>
    <organismsDiffer>false</organismsDiffer>
    <experiments>3</experiments>
</comment>
<comment type="interaction">
    <interactant intactId="EBI-11959013">
        <id>Q08209-2</id>
    </interactant>
    <interactant intactId="EBI-711260">
        <id>Q13432</id>
        <label>UNC119</label>
    </interactant>
    <organismsDiffer>false</organismsDiffer>
    <experiments>5</experiments>
</comment>
<comment type="interaction">
    <interactant intactId="EBI-11959013">
        <id>Q08209-2</id>
    </interactant>
    <interactant intactId="EBI-750454">
        <id>Q96EJ4</id>
    </interactant>
    <organismsDiffer>false</organismsDiffer>
    <experiments>3</experiments>
</comment>
<comment type="subcellular location">
    <subcellularLocation>
        <location evidence="18 20">Cytoplasm</location>
    </subcellularLocation>
    <subcellularLocation>
        <location evidence="20 25">Cell membrane</location>
        <topology evidence="20">Peripheral membrane protein</topology>
    </subcellularLocation>
    <subcellularLocation>
        <location evidence="4">Cell membrane</location>
        <location evidence="4">Sarcolemma</location>
    </subcellularLocation>
    <subcellularLocation>
        <location evidence="4">Cytoplasm</location>
        <location evidence="4">Myofibril</location>
        <location evidence="4">Sarcomere</location>
        <location evidence="4">Z line</location>
    </subcellularLocation>
    <subcellularLocation>
        <location evidence="20">Cell projection</location>
        <location evidence="20">Dendritic spine</location>
    </subcellularLocation>
    <text evidence="4 20">Colocalizes with ACTN1 and MYOZ2 at the Z line in heart and skeletal muscle (By similarity). Recruited to the cell membrane by scaffold protein AKAP5 following L-type Ca(2+)-channel activation (PubMed:22343722).</text>
</comment>
<comment type="alternative products">
    <event type="alternative splicing"/>
    <isoform>
        <id>Q08209-1</id>
        <name>1</name>
        <sequence type="displayed"/>
    </isoform>
    <isoform>
        <id>Q08209-2</id>
        <name>2</name>
        <sequence type="described" ref="VSP_018562"/>
    </isoform>
    <isoform>
        <id>Q08209-3</id>
        <name>3</name>
        <sequence type="described" ref="VSP_043378 VSP_018562"/>
    </isoform>
    <isoform>
        <id>Q08209-4</id>
        <name>4</name>
        <sequence type="described" ref="VSP_047755"/>
    </isoform>
    <isoform>
        <id>Q08209-5</id>
        <name>5</name>
        <sequence type="described" ref="VSP_054467"/>
    </isoform>
</comment>
<comment type="tissue specificity">
    <text evidence="27 29">Expressed in keratinocytes (at protein level) (PubMed:29043977). Expressed in lymphoblasts (at protein level) (PubMed:30254215).</text>
</comment>
<comment type="domain">
    <text evidence="3">The autoinhibitory domain prevents access to the catalytic site.</text>
</comment>
<comment type="domain">
    <text evidence="3">The autoinhibitory segment prevents access to the substrate binding site.</text>
</comment>
<comment type="domain">
    <text evidence="23">Possible isomerization of Pro-309 within the SAPNY motif triggers a conformation switch which affects the organization and thus accessibility of the active site and the substrate binding region (PxIxIF motif). The trans- to cis-transition may favor calcineurin A activation and substrate binding. The reverse cis- to trans-transition may be enhanced by peptidyl-prolyl isomerases such as PPIA.</text>
</comment>
<comment type="disease" evidence="26 28 29">
    <disease id="DI-05114">
        <name>Epileptic encephalopathy, infantile or early childhood, 1</name>
        <acronym>IECEE1</acronym>
        <description>A form of epileptic encephalopathy, a heterogeneous group of severe childhood onset epilepsies characterized by refractory seizures, neurodevelopmental impairment, and poor prognosis. Development is normal prior to seizure onset, after which cognitive and motor delays become apparent. IECEE1 is an autosomal dominant condition with onset of seizures between the first weeks and first years of life.</description>
        <dbReference type="MIM" id="617711"/>
    </disease>
    <text>The disease is caused by variants affecting the gene represented in this entry.</text>
</comment>
<comment type="disease" evidence="28">
    <disease id="DI-05453">
        <name>Arthrogryposis, cleft palate, craniosynostosis, and impaired intellectual development</name>
        <acronym>ACCIID</acronym>
        <description>An autosomal dominant disease characterized by moderate to severe intellectual disability, craniosynostosis, cleft palate, micrognathia, arthrogryposis, and short stature. Some patients may present bone abnormalities and generalized seizures.</description>
        <dbReference type="MIM" id="618265"/>
    </disease>
    <text>The disease is caused by variants affecting the gene represented in this entry.</text>
</comment>
<comment type="miscellaneous">
    <text evidence="21">Although African swine fever virus infects pigs and not humans, human PPP3CA has been used for the crystallization. PPP3CA interacts with African swine fever virus Mal-047/A238L (via PKIIIT and FLCVK motifs); the interaction does not block catalytic activity per se but inhibits PPP3CA function by blocking the access to the two substrate recognition sites.</text>
</comment>
<comment type="similarity">
    <text evidence="42">Belongs to the PPP phosphatase family. PP-2B subfamily.</text>
</comment>
<comment type="online information" name="Wikipedia">
    <link uri="https://en.wikipedia.org/wiki/Calcineurin"/>
    <text>Calcineurin entry</text>
</comment>
<organism>
    <name type="scientific">Homo sapiens</name>
    <name type="common">Human</name>
    <dbReference type="NCBI Taxonomy" id="9606"/>
    <lineage>
        <taxon>Eukaryota</taxon>
        <taxon>Metazoa</taxon>
        <taxon>Chordata</taxon>
        <taxon>Craniata</taxon>
        <taxon>Vertebrata</taxon>
        <taxon>Euteleostomi</taxon>
        <taxon>Mammalia</taxon>
        <taxon>Eutheria</taxon>
        <taxon>Euarchontoglires</taxon>
        <taxon>Primates</taxon>
        <taxon>Haplorrhini</taxon>
        <taxon>Catarrhini</taxon>
        <taxon>Hominidae</taxon>
        <taxon>Homo</taxon>
    </lineage>
</organism>
<name>PP2BA_HUMAN</name>
<gene>
    <name evidence="46" type="primary">PPP3CA</name>
    <name type="synonym">CALNA</name>
    <name type="synonym">CNA</name>
</gene>
<feature type="initiator methionine" description="Removed" evidence="57">
    <location>
        <position position="1"/>
    </location>
</feature>
<feature type="chain" id="PRO_0000058822" description="Protein phosphatase 3 catalytic subunit alpha">
    <location>
        <begin position="2"/>
        <end position="521"/>
    </location>
</feature>
<feature type="region of interest" description="Catalytic" evidence="42">
    <location>
        <begin position="56"/>
        <end position="340"/>
    </location>
</feature>
<feature type="region of interest" description="Interaction with PxIxIF motif in substrate" evidence="13 14 20 21 23">
    <location>
        <begin position="327"/>
        <end position="336"/>
    </location>
</feature>
<feature type="region of interest" description="Calcineurin B binding" evidence="8 9 13 21 24 35">
    <location>
        <begin position="341"/>
        <end position="369"/>
    </location>
</feature>
<feature type="region of interest" description="Calmodulin-binding" evidence="16 19 22 36">
    <location>
        <begin position="392"/>
        <end position="406"/>
    </location>
</feature>
<feature type="region of interest" description="Autoinhibitory segment" evidence="1">
    <location>
        <begin position="407"/>
        <end position="414"/>
    </location>
</feature>
<feature type="region of interest" description="Autoinhibitory domain" evidence="35">
    <location>
        <begin position="465"/>
        <end position="487"/>
    </location>
</feature>
<feature type="region of interest" description="Disordered" evidence="5">
    <location>
        <begin position="475"/>
        <end position="521"/>
    </location>
</feature>
<feature type="short sequence motif" description="SAPNY motif" evidence="43">
    <location>
        <begin position="307"/>
        <end position="311"/>
    </location>
</feature>
<feature type="compositionally biased region" description="Basic and acidic residues" evidence="5">
    <location>
        <begin position="475"/>
        <end position="490"/>
    </location>
</feature>
<feature type="compositionally biased region" description="Polar residues" evidence="5">
    <location>
        <begin position="494"/>
        <end position="503"/>
    </location>
</feature>
<feature type="compositionally biased region" description="Low complexity" evidence="5">
    <location>
        <begin position="504"/>
        <end position="521"/>
    </location>
</feature>
<feature type="active site" description="Proton donor" evidence="45">
    <location>
        <position position="151"/>
    </location>
</feature>
<feature type="binding site" evidence="8 13 20 23 24 32 35 47 48 49 50 51 52 53 55 56">
    <location>
        <position position="90"/>
    </location>
    <ligand>
        <name>Fe cation</name>
        <dbReference type="ChEBI" id="CHEBI:24875"/>
    </ligand>
</feature>
<feature type="binding site" evidence="8 13 20 23 24 32 35 47 48 49 50 51 52 53 55 56">
    <location>
        <position position="92"/>
    </location>
    <ligand>
        <name>Fe cation</name>
        <dbReference type="ChEBI" id="CHEBI:24875"/>
    </ligand>
</feature>
<feature type="binding site" evidence="8 13 20 23 24 32 35 47 48 49 50 51 52 53 55 56">
    <location>
        <position position="118"/>
    </location>
    <ligand>
        <name>Fe cation</name>
        <dbReference type="ChEBI" id="CHEBI:24875"/>
    </ligand>
</feature>
<feature type="binding site" evidence="8 13 20 23 24 32 35 47 48 49 50 51 52 53 55 56">
    <location>
        <position position="118"/>
    </location>
    <ligand>
        <name>Zn(2+)</name>
        <dbReference type="ChEBI" id="CHEBI:29105"/>
    </ligand>
</feature>
<feature type="binding site" evidence="8 13 20 23 24 32 35 47 48 49 50 51 52 53 55 56">
    <location>
        <position position="150"/>
    </location>
    <ligand>
        <name>Zn(2+)</name>
        <dbReference type="ChEBI" id="CHEBI:29105"/>
    </ligand>
</feature>
<feature type="binding site" evidence="8 13 20 23 24 32 35 47 48 49 50 51 52 53 55 56">
    <location>
        <position position="199"/>
    </location>
    <ligand>
        <name>Zn(2+)</name>
        <dbReference type="ChEBI" id="CHEBI:29105"/>
    </ligand>
</feature>
<feature type="binding site" evidence="8 13 20 23 24 32 35 47 48 49 50 51 52 53 55 56">
    <location>
        <position position="281"/>
    </location>
    <ligand>
        <name>Zn(2+)</name>
        <dbReference type="ChEBI" id="CHEBI:29105"/>
    </ligand>
</feature>
<feature type="site" description="Interaction with PxVP motif in substrate" evidence="21 24">
    <location>
        <position position="352"/>
    </location>
</feature>
<feature type="modified residue" description="N-acetylserine" evidence="57">
    <location>
        <position position="2"/>
    </location>
</feature>
<feature type="modified residue" description="3'-nitrotyrosine" evidence="3">
    <location>
        <position position="224"/>
    </location>
</feature>
<feature type="modified residue" description="Phosphoserine" evidence="4">
    <location>
        <position position="469"/>
    </location>
</feature>
<feature type="modified residue" description="Phosphoserine" evidence="58">
    <location>
        <position position="492"/>
    </location>
</feature>
<feature type="splice variant" id="VSP_054467" description="In isoform 5." evidence="40">
    <location>
        <begin position="20"/>
        <end position="86"/>
    </location>
</feature>
<feature type="splice variant" id="VSP_047755" description="In isoform 4." evidence="39">
    <location>
        <begin position="87"/>
        <end position="318"/>
    </location>
</feature>
<feature type="splice variant" id="VSP_043378" description="In isoform 3." evidence="39">
    <location>
        <begin position="318"/>
        <end position="359"/>
    </location>
</feature>
<feature type="splice variant" id="VSP_018562" description="In isoform 2 and isoform 3." evidence="37 38 39">
    <location>
        <begin position="448"/>
        <end position="457"/>
    </location>
</feature>
<feature type="sequence variant" id="VAR_080348" description="In IECEE1; dbSNP:rs1553925558." evidence="26 28">
    <original>H</original>
    <variation>R</variation>
    <location>
        <position position="92"/>
    </location>
</feature>
<feature type="sequence variant" id="VAR_081900" description="In IECEE1." evidence="28">
    <original>N</original>
    <variation>I</variation>
    <location>
        <position position="150"/>
    </location>
</feature>
<feature type="sequence variant" id="VAR_081901" description="In IECEE1; dbSNP:rs780035527." evidence="28">
    <original>D</original>
    <variation>E</variation>
    <location>
        <position position="234"/>
    </location>
</feature>
<feature type="sequence variant" id="VAR_080349" description="In IECEE1; dbSNP:rs199706529." evidence="26">
    <original>H</original>
    <variation>Q</variation>
    <location>
        <position position="281"/>
    </location>
</feature>
<feature type="sequence variant" id="VAR_080350" description="In IECEE1; dbSNP:rs1553923787." evidence="26">
    <original>E</original>
    <variation>K</variation>
    <location>
        <position position="282"/>
    </location>
</feature>
<feature type="sequence variant" id="VAR_085829" description="In IECEE1; results in constitutive phosphatase activity in the absence of calmodulin." evidence="29">
    <location>
        <begin position="442"/>
        <end position="521"/>
    </location>
</feature>
<feature type="sequence variant" id="VAR_080351" description="In IECEE1." evidence="26">
    <location>
        <begin position="445"/>
        <end position="521"/>
    </location>
</feature>
<feature type="sequence variant" id="VAR_080352" description="In IECEE1; uncertain significance; dbSNP:rs1553920374." evidence="26">
    <original>A</original>
    <variation>T</variation>
    <location>
        <position position="447"/>
    </location>
</feature>
<feature type="sequence variant" id="VAR_081902" description="In ACCIID; dbSNP:rs1560567347." evidence="28">
    <original>F</original>
    <variation>L</variation>
    <location>
        <position position="470"/>
    </location>
</feature>
<feature type="sequence variant" id="VAR_081903" description="In ACCIID; dbSNP:rs1560567337." evidence="28">
    <original>A</original>
    <variation>T</variation>
    <location>
        <position position="473"/>
    </location>
</feature>
<feature type="mutagenesis site" description="Partial loss of Ca(2+)-mediated transcription factor NFAT activation; when associated with F-341." evidence="23">
    <original>Y</original>
    <variation>F</variation>
    <location>
        <position position="288"/>
    </location>
</feature>
<feature type="mutagenesis site" description="Loss of Ca(2+)-mediated transcription factor NFAT activation; when associated with F-341." evidence="23">
    <original>Y</original>
    <variation>N</variation>
    <variation>A</variation>
    <location>
        <position position="288"/>
    </location>
</feature>
<feature type="mutagenesis site" description="Loss of Ca(2+)-mediated transcription factor NFAT activation; when associated with F-341." evidence="23">
    <location>
        <begin position="328"/>
        <end position="332"/>
    </location>
</feature>
<feature type="mutagenesis site" description="Resistant to cyclosporin A-mediated inhibition. Loss of Ca(2+)-mediated transcription factor NFAT activation; when associated with N-288, A-228 or 328-V--R-332 DEL. Partial loss in Ca(2+)-mediated transcription factor NFAT activation; when associated with F-288." evidence="23">
    <original>Y</original>
    <variation>F</variation>
    <location>
        <position position="341"/>
    </location>
</feature>
<feature type="strand" evidence="63">
    <location>
        <begin position="13"/>
        <end position="15"/>
    </location>
</feature>
<feature type="helix" evidence="62">
    <location>
        <begin position="31"/>
        <end position="34"/>
    </location>
</feature>
<feature type="helix" evidence="62">
    <location>
        <begin position="43"/>
        <end position="51"/>
    </location>
</feature>
<feature type="helix" evidence="62">
    <location>
        <begin position="58"/>
        <end position="73"/>
    </location>
</feature>
<feature type="strand" evidence="62">
    <location>
        <begin position="77"/>
        <end position="81"/>
    </location>
</feature>
<feature type="strand" evidence="62">
    <location>
        <begin position="83"/>
        <end position="88"/>
    </location>
</feature>
<feature type="helix" evidence="62">
    <location>
        <begin position="95"/>
        <end position="105"/>
    </location>
</feature>
<feature type="turn" evidence="64">
    <location>
        <begin position="108"/>
        <end position="110"/>
    </location>
</feature>
<feature type="strand" evidence="62">
    <location>
        <begin position="113"/>
        <end position="115"/>
    </location>
</feature>
<feature type="strand" evidence="62">
    <location>
        <begin position="120"/>
        <end position="123"/>
    </location>
</feature>
<feature type="helix" evidence="62">
    <location>
        <begin position="126"/>
        <end position="139"/>
    </location>
</feature>
<feature type="turn" evidence="62">
    <location>
        <begin position="141"/>
        <end position="143"/>
    </location>
</feature>
<feature type="strand" evidence="62">
    <location>
        <begin position="144"/>
        <end position="146"/>
    </location>
</feature>
<feature type="helix" evidence="62">
    <location>
        <begin position="154"/>
        <end position="159"/>
    </location>
</feature>
<feature type="helix" evidence="62">
    <location>
        <begin position="162"/>
        <end position="169"/>
    </location>
</feature>
<feature type="helix" evidence="62">
    <location>
        <begin position="172"/>
        <end position="183"/>
    </location>
</feature>
<feature type="strand" evidence="62">
    <location>
        <begin position="188"/>
        <end position="191"/>
    </location>
</feature>
<feature type="turn" evidence="62">
    <location>
        <begin position="192"/>
        <end position="194"/>
    </location>
</feature>
<feature type="strand" evidence="62">
    <location>
        <begin position="195"/>
        <end position="200"/>
    </location>
</feature>
<feature type="strand" evidence="60">
    <location>
        <begin position="206"/>
        <end position="208"/>
    </location>
</feature>
<feature type="helix" evidence="62">
    <location>
        <begin position="210"/>
        <end position="213"/>
    </location>
</feature>
<feature type="strand" evidence="62">
    <location>
        <begin position="218"/>
        <end position="220"/>
    </location>
</feature>
<feature type="strand" evidence="62">
    <location>
        <begin position="223"/>
        <end position="225"/>
    </location>
</feature>
<feature type="helix" evidence="62">
    <location>
        <begin position="226"/>
        <end position="232"/>
    </location>
</feature>
<feature type="turn" evidence="62">
    <location>
        <begin position="237"/>
        <end position="240"/>
    </location>
</feature>
<feature type="strand" evidence="62">
    <location>
        <begin position="247"/>
        <end position="250"/>
    </location>
</feature>
<feature type="turn" evidence="62">
    <location>
        <begin position="252"/>
        <end position="254"/>
    </location>
</feature>
<feature type="strand" evidence="62">
    <location>
        <begin position="255"/>
        <end position="260"/>
    </location>
</feature>
<feature type="helix" evidence="62">
    <location>
        <begin position="262"/>
        <end position="271"/>
    </location>
</feature>
<feature type="strand" evidence="62">
    <location>
        <begin position="276"/>
        <end position="279"/>
    </location>
</feature>
<feature type="strand" evidence="62">
    <location>
        <begin position="287"/>
        <end position="290"/>
    </location>
</feature>
<feature type="turn" evidence="62">
    <location>
        <begin position="295"/>
        <end position="297"/>
    </location>
</feature>
<feature type="strand" evidence="62">
    <location>
        <begin position="298"/>
        <end position="306"/>
    </location>
</feature>
<feature type="helix" evidence="62">
    <location>
        <begin position="311"/>
        <end position="313"/>
    </location>
</feature>
<feature type="strand" evidence="62">
    <location>
        <begin position="319"/>
        <end position="325"/>
    </location>
</feature>
<feature type="strand" evidence="62">
    <location>
        <begin position="328"/>
        <end position="334"/>
    </location>
</feature>
<feature type="helix" evidence="62">
    <location>
        <begin position="344"/>
        <end position="346"/>
    </location>
</feature>
<feature type="helix" evidence="62">
    <location>
        <begin position="349"/>
        <end position="369"/>
    </location>
</feature>
<feature type="helix" evidence="61">
    <location>
        <begin position="396"/>
        <end position="409"/>
    </location>
</feature>
<feature type="helix" evidence="59">
    <location>
        <begin position="470"/>
        <end position="477"/>
    </location>
</feature>
<feature type="helix" evidence="59">
    <location>
        <begin position="478"/>
        <end position="481"/>
    </location>
</feature>
<protein>
    <recommendedName>
        <fullName evidence="46">Protein phosphatase 3 catalytic subunit alpha</fullName>
        <ecNumber evidence="12 17 18 21 32 43 44">3.1.3.16</ecNumber>
    </recommendedName>
    <alternativeName>
        <fullName>CAM-PRP catalytic subunit</fullName>
    </alternativeName>
    <alternativeName>
        <fullName evidence="41">Calcineurin A alpha</fullName>
    </alternativeName>
    <alternativeName>
        <fullName evidence="3">Calmodulin-dependent calcineurin A subunit alpha isoform</fullName>
        <shortName evidence="3">CNA alpha</shortName>
    </alternativeName>
    <alternativeName>
        <fullName evidence="46">Serine/threonine-protein phosphatase 2B catalytic subunit alpha isoform</fullName>
    </alternativeName>
</protein>
<accession>Q08209</accession>
<accession>A1A441</accession>
<accession>A8K3B7</accession>
<accession>A8W6Z7</accession>
<accession>A8W6Z8</accession>
<accession>B5BUA2</accession>
<accession>Q8TAW9</accession>
<evidence type="ECO:0000250" key="1">
    <source>
        <dbReference type="UniProtKB" id="P16298"/>
    </source>
</evidence>
<evidence type="ECO:0000250" key="2">
    <source>
        <dbReference type="UniProtKB" id="P48452"/>
    </source>
</evidence>
<evidence type="ECO:0000250" key="3">
    <source>
        <dbReference type="UniProtKB" id="P63328"/>
    </source>
</evidence>
<evidence type="ECO:0000250" key="4">
    <source>
        <dbReference type="UniProtKB" id="P63329"/>
    </source>
</evidence>
<evidence type="ECO:0000256" key="5">
    <source>
        <dbReference type="SAM" id="MobiDB-lite"/>
    </source>
</evidence>
<evidence type="ECO:0000269" key="6">
    <source>
    </source>
</evidence>
<evidence type="ECO:0000269" key="7">
    <source>
    </source>
</evidence>
<evidence type="ECO:0000269" key="8">
    <source>
    </source>
</evidence>
<evidence type="ECO:0000269" key="9">
    <source>
    </source>
</evidence>
<evidence type="ECO:0000269" key="10">
    <source>
    </source>
</evidence>
<evidence type="ECO:0000269" key="11">
    <source>
    </source>
</evidence>
<evidence type="ECO:0000269" key="12">
    <source>
    </source>
</evidence>
<evidence type="ECO:0000269" key="13">
    <source>
    </source>
</evidence>
<evidence type="ECO:0000269" key="14">
    <source>
    </source>
</evidence>
<evidence type="ECO:0000269" key="15">
    <source>
    </source>
</evidence>
<evidence type="ECO:0000269" key="16">
    <source>
    </source>
</evidence>
<evidence type="ECO:0000269" key="17">
    <source>
    </source>
</evidence>
<evidence type="ECO:0000269" key="18">
    <source>
    </source>
</evidence>
<evidence type="ECO:0000269" key="19">
    <source>
    </source>
</evidence>
<evidence type="ECO:0000269" key="20">
    <source>
    </source>
</evidence>
<evidence type="ECO:0000269" key="21">
    <source>
    </source>
</evidence>
<evidence type="ECO:0000269" key="22">
    <source>
    </source>
</evidence>
<evidence type="ECO:0000269" key="23">
    <source>
    </source>
</evidence>
<evidence type="ECO:0000269" key="24">
    <source>
    </source>
</evidence>
<evidence type="ECO:0000269" key="25">
    <source>
    </source>
</evidence>
<evidence type="ECO:0000269" key="26">
    <source>
    </source>
</evidence>
<evidence type="ECO:0000269" key="27">
    <source>
    </source>
</evidence>
<evidence type="ECO:0000269" key="28">
    <source>
    </source>
</evidence>
<evidence type="ECO:0000269" key="29">
    <source>
    </source>
</evidence>
<evidence type="ECO:0000269" key="30">
    <source>
    </source>
</evidence>
<evidence type="ECO:0000269" key="31">
    <source>
    </source>
</evidence>
<evidence type="ECO:0000269" key="32">
    <source>
    </source>
</evidence>
<evidence type="ECO:0000269" key="33">
    <source>
    </source>
</evidence>
<evidence type="ECO:0000269" key="34">
    <source>
    </source>
</evidence>
<evidence type="ECO:0000269" key="35">
    <source>
    </source>
</evidence>
<evidence type="ECO:0000269" key="36">
    <source ref="34"/>
</evidence>
<evidence type="ECO:0000303" key="37">
    <source>
    </source>
</evidence>
<evidence type="ECO:0000303" key="38">
    <source>
    </source>
</evidence>
<evidence type="ECO:0000303" key="39">
    <source>
    </source>
</evidence>
<evidence type="ECO:0000303" key="40">
    <source>
    </source>
</evidence>
<evidence type="ECO:0000303" key="41">
    <source>
    </source>
</evidence>
<evidence type="ECO:0000305" key="42"/>
<evidence type="ECO:0000305" key="43">
    <source>
    </source>
</evidence>
<evidence type="ECO:0000305" key="44">
    <source>
    </source>
</evidence>
<evidence type="ECO:0000305" key="45">
    <source>
    </source>
</evidence>
<evidence type="ECO:0000312" key="46">
    <source>
        <dbReference type="HGNC" id="HGNC:9314"/>
    </source>
</evidence>
<evidence type="ECO:0007744" key="47">
    <source>
        <dbReference type="PDB" id="1AUI"/>
    </source>
</evidence>
<evidence type="ECO:0007744" key="48">
    <source>
        <dbReference type="PDB" id="1M63"/>
    </source>
</evidence>
<evidence type="ECO:0007744" key="49">
    <source>
        <dbReference type="PDB" id="2P6B"/>
    </source>
</evidence>
<evidence type="ECO:0007744" key="50">
    <source>
        <dbReference type="PDB" id="3LL8"/>
    </source>
</evidence>
<evidence type="ECO:0007744" key="51">
    <source>
        <dbReference type="PDB" id="5C1V"/>
    </source>
</evidence>
<evidence type="ECO:0007744" key="52">
    <source>
        <dbReference type="PDB" id="5SVE"/>
    </source>
</evidence>
<evidence type="ECO:0007744" key="53">
    <source>
        <dbReference type="PDB" id="6NUC"/>
    </source>
</evidence>
<evidence type="ECO:0007744" key="54">
    <source>
        <dbReference type="PDB" id="6NUF"/>
    </source>
</evidence>
<evidence type="ECO:0007744" key="55">
    <source>
        <dbReference type="PDB" id="6NUU"/>
    </source>
</evidence>
<evidence type="ECO:0007744" key="56">
    <source>
        <dbReference type="PDB" id="6UUQ"/>
    </source>
</evidence>
<evidence type="ECO:0007744" key="57">
    <source>
    </source>
</evidence>
<evidence type="ECO:0007744" key="58">
    <source>
    </source>
</evidence>
<evidence type="ECO:0007829" key="59">
    <source>
        <dbReference type="PDB" id="1AUI"/>
    </source>
</evidence>
<evidence type="ECO:0007829" key="60">
    <source>
        <dbReference type="PDB" id="2JOG"/>
    </source>
</evidence>
<evidence type="ECO:0007829" key="61">
    <source>
        <dbReference type="PDB" id="2W73"/>
    </source>
</evidence>
<evidence type="ECO:0007829" key="62">
    <source>
        <dbReference type="PDB" id="4F0Z"/>
    </source>
</evidence>
<evidence type="ECO:0007829" key="63">
    <source>
        <dbReference type="PDB" id="6NUC"/>
    </source>
</evidence>
<evidence type="ECO:0007829" key="64">
    <source>
        <dbReference type="PDB" id="6UUQ"/>
    </source>
</evidence>
<sequence>MSEPKAIDPKLSTTDRVVKAVPFPPSHRLTAKEVFDNDGKPRVDILKAHLMKEGRLEESVALRIITEGASILRQEKNLLDIDAPVTVCGDIHGQFFDLMKLFEVGGSPANTRYLFLGDYVDRGYFSIECVLYLWALKILYPKTLFLLRGNHECRHLTEYFTFKQECKIKYSERVYDACMDAFDCLPLAALMNQQFLCVHGGLSPEINTLDDIRKLDRFKEPPAYGPMCDILWSDPLEDFGNEKTQEHFTHNTVRGCSYFYSYPAVCEFLQHNNLLSILRAHEAQDAGYRMYRKSQTTGFPSLITIFSAPNYLDVYNNKAAVLKYENNVMNIRQFNCSPHPYWLPNFMDVFTWSLPFVGEKVTEMLVNVLNICSDDELGSEEDGFDGATAAARKEVIRNKIRAIGKMARVFSVLREESESVLTLKGLTPTGMLPSGVLSGGKQTLQSATVEAIEADEAIKGFSPQHKITSFEEAKGLDRINERMPPRRDAMPSDANLNSINKALTSETNGTDSNGSNSSNIQ</sequence>
<proteinExistence type="evidence at protein level"/>
<dbReference type="EC" id="3.1.3.16" evidence="12 17 18 21 32 43 44"/>
<dbReference type="EMBL" id="L14778">
    <property type="protein sequence ID" value="AAA02631.1"/>
    <property type="molecule type" value="mRNA"/>
</dbReference>
<dbReference type="EMBL" id="EU192652">
    <property type="protein sequence ID" value="ABW74484.1"/>
    <property type="molecule type" value="mRNA"/>
</dbReference>
<dbReference type="EMBL" id="EU192653">
    <property type="protein sequence ID" value="ABW74485.1"/>
    <property type="molecule type" value="mRNA"/>
</dbReference>
<dbReference type="EMBL" id="AY904364">
    <property type="protein sequence ID" value="AAY17314.1"/>
    <property type="molecule type" value="mRNA"/>
</dbReference>
<dbReference type="EMBL" id="AK290532">
    <property type="protein sequence ID" value="BAF83221.1"/>
    <property type="molecule type" value="mRNA"/>
</dbReference>
<dbReference type="EMBL" id="AL353950">
    <property type="protein sequence ID" value="CAB89253.1"/>
    <property type="molecule type" value="mRNA"/>
</dbReference>
<dbReference type="EMBL" id="AB451338">
    <property type="protein sequence ID" value="BAG70152.1"/>
    <property type="molecule type" value="mRNA"/>
</dbReference>
<dbReference type="EMBL" id="AB451487">
    <property type="protein sequence ID" value="BAG70301.1"/>
    <property type="molecule type" value="mRNA"/>
</dbReference>
<dbReference type="EMBL" id="AC092671">
    <property type="status" value="NOT_ANNOTATED_CDS"/>
    <property type="molecule type" value="Genomic_DNA"/>
</dbReference>
<dbReference type="EMBL" id="AP001816">
    <property type="status" value="NOT_ANNOTATED_CDS"/>
    <property type="molecule type" value="Genomic_DNA"/>
</dbReference>
<dbReference type="EMBL" id="AP001870">
    <property type="status" value="NOT_ANNOTATED_CDS"/>
    <property type="molecule type" value="Genomic_DNA"/>
</dbReference>
<dbReference type="EMBL" id="AP001939">
    <property type="status" value="NOT_ANNOTATED_CDS"/>
    <property type="molecule type" value="Genomic_DNA"/>
</dbReference>
<dbReference type="EMBL" id="CH471057">
    <property type="protein sequence ID" value="EAX06125.1"/>
    <property type="molecule type" value="Genomic_DNA"/>
</dbReference>
<dbReference type="EMBL" id="CH471057">
    <property type="protein sequence ID" value="EAX06124.1"/>
    <property type="molecule type" value="Genomic_DNA"/>
</dbReference>
<dbReference type="EMBL" id="BC025714">
    <property type="protein sequence ID" value="AAH25714.1"/>
    <property type="molecule type" value="mRNA"/>
</dbReference>
<dbReference type="CCDS" id="CCDS34037.1">
    <molecule id="Q08209-1"/>
</dbReference>
<dbReference type="CCDS" id="CCDS47113.1">
    <molecule id="Q08209-3"/>
</dbReference>
<dbReference type="CCDS" id="CCDS47114.1">
    <molecule id="Q08209-2"/>
</dbReference>
<dbReference type="PIR" id="S35067">
    <property type="entry name" value="S35067"/>
</dbReference>
<dbReference type="RefSeq" id="NP_000935.1">
    <molecule id="Q08209-1"/>
    <property type="nucleotide sequence ID" value="NM_000944.5"/>
</dbReference>
<dbReference type="RefSeq" id="NP_001124163.1">
    <molecule id="Q08209-2"/>
    <property type="nucleotide sequence ID" value="NM_001130691.2"/>
</dbReference>
<dbReference type="RefSeq" id="NP_001124164.1">
    <molecule id="Q08209-3"/>
    <property type="nucleotide sequence ID" value="NM_001130692.2"/>
</dbReference>
<dbReference type="PDB" id="1AUI">
    <property type="method" value="X-ray"/>
    <property type="resolution" value="2.10 A"/>
    <property type="chains" value="A=1-521"/>
</dbReference>
<dbReference type="PDB" id="1M63">
    <property type="method" value="X-ray"/>
    <property type="resolution" value="2.80 A"/>
    <property type="chains" value="A/E=1-372"/>
</dbReference>
<dbReference type="PDB" id="1MF8">
    <property type="method" value="X-ray"/>
    <property type="resolution" value="3.10 A"/>
    <property type="chains" value="A=20-392"/>
</dbReference>
<dbReference type="PDB" id="2JOG">
    <property type="method" value="NMR"/>
    <property type="chains" value="A=21-347"/>
</dbReference>
<dbReference type="PDB" id="2JZI">
    <property type="method" value="NMR"/>
    <property type="chains" value="B=391-414"/>
</dbReference>
<dbReference type="PDB" id="2P6B">
    <property type="method" value="X-ray"/>
    <property type="resolution" value="2.30 A"/>
    <property type="chains" value="A/C=1-380"/>
</dbReference>
<dbReference type="PDB" id="2R28">
    <property type="method" value="X-ray"/>
    <property type="resolution" value="1.86 A"/>
    <property type="chains" value="C/D=389-413"/>
</dbReference>
<dbReference type="PDB" id="2W73">
    <property type="method" value="X-ray"/>
    <property type="resolution" value="1.45 A"/>
    <property type="chains" value="K/L/M/O=395-411"/>
</dbReference>
<dbReference type="PDB" id="3LL8">
    <property type="method" value="X-ray"/>
    <property type="resolution" value="2.00 A"/>
    <property type="chains" value="A/C=14-370"/>
</dbReference>
<dbReference type="PDB" id="4F0Z">
    <property type="method" value="X-ray"/>
    <property type="resolution" value="1.70 A"/>
    <property type="chains" value="A=1-370"/>
</dbReference>
<dbReference type="PDB" id="4Q5U">
    <property type="method" value="X-ray"/>
    <property type="resolution" value="1.95 A"/>
    <property type="chains" value="C=391-414"/>
</dbReference>
<dbReference type="PDB" id="5C1V">
    <property type="method" value="X-ray"/>
    <property type="resolution" value="3.35 A"/>
    <property type="chains" value="A/B=2-346"/>
</dbReference>
<dbReference type="PDB" id="5SVE">
    <property type="method" value="X-ray"/>
    <property type="resolution" value="2.60 A"/>
    <property type="chains" value="A=1-370"/>
</dbReference>
<dbReference type="PDB" id="6NUC">
    <property type="method" value="X-ray"/>
    <property type="resolution" value="1.90 A"/>
    <property type="chains" value="A=1-370"/>
</dbReference>
<dbReference type="PDB" id="6NUF">
    <property type="method" value="X-ray"/>
    <property type="resolution" value="1.90 A"/>
    <property type="chains" value="A=1-370"/>
</dbReference>
<dbReference type="PDB" id="6NUU">
    <property type="method" value="X-ray"/>
    <property type="resolution" value="2.30 A"/>
    <property type="chains" value="A=1-370"/>
</dbReference>
<dbReference type="PDB" id="6UUQ">
    <property type="method" value="X-ray"/>
    <property type="resolution" value="1.85 A"/>
    <property type="chains" value="A=26-339"/>
</dbReference>
<dbReference type="PDB" id="9B9G">
    <property type="method" value="EM"/>
    <property type="resolution" value="3.50 A"/>
    <property type="chains" value="I/K=2-391"/>
</dbReference>
<dbReference type="PDBsum" id="1AUI"/>
<dbReference type="PDBsum" id="1M63"/>
<dbReference type="PDBsum" id="1MF8"/>
<dbReference type="PDBsum" id="2JOG"/>
<dbReference type="PDBsum" id="2JZI"/>
<dbReference type="PDBsum" id="2P6B"/>
<dbReference type="PDBsum" id="2R28"/>
<dbReference type="PDBsum" id="2W73"/>
<dbReference type="PDBsum" id="3LL8"/>
<dbReference type="PDBsum" id="4F0Z"/>
<dbReference type="PDBsum" id="4Q5U"/>
<dbReference type="PDBsum" id="5C1V"/>
<dbReference type="PDBsum" id="5SVE"/>
<dbReference type="PDBsum" id="6NUC"/>
<dbReference type="PDBsum" id="6NUF"/>
<dbReference type="PDBsum" id="6NUU"/>
<dbReference type="PDBsum" id="6UUQ"/>
<dbReference type="PDBsum" id="9B9G"/>
<dbReference type="BMRB" id="Q08209"/>
<dbReference type="EMDB" id="EMD-44382"/>
<dbReference type="SMR" id="Q08209"/>
<dbReference type="BioGRID" id="111522">
    <property type="interactions" value="151"/>
</dbReference>
<dbReference type="ComplexPortal" id="CPX-1003">
    <property type="entry name" value="Calcineurin-Calmodulin complex, alpha-R1 variant"/>
</dbReference>
<dbReference type="ComplexPortal" id="CPX-1048">
    <property type="entry name" value="Calcineurin-Calmodulin complex, alpha-R2 variant"/>
</dbReference>
<dbReference type="ComplexPortal" id="CPX-1114">
    <property type="entry name" value="Calcineurin-Calmodulin-AKAP5 complex, alpha-R2 variant"/>
</dbReference>
<dbReference type="ComplexPortal" id="CPX-674">
    <property type="entry name" value="Calcineurin-Calmodulin-AKAP5 complex, alpha-R1 variant"/>
</dbReference>
<dbReference type="CORUM" id="Q08209"/>
<dbReference type="DIP" id="DIP-6095N"/>
<dbReference type="ELM" id="Q08209"/>
<dbReference type="FunCoup" id="Q08209">
    <property type="interactions" value="2078"/>
</dbReference>
<dbReference type="IntAct" id="Q08209">
    <property type="interactions" value="80"/>
</dbReference>
<dbReference type="MINT" id="Q08209"/>
<dbReference type="STRING" id="9606.ENSP00000378323"/>
<dbReference type="BindingDB" id="Q08209"/>
<dbReference type="ChEMBL" id="CHEMBL4445"/>
<dbReference type="DrugBank" id="DB00091">
    <property type="generic name" value="Cyclosporine"/>
</dbReference>
<dbReference type="DrugBank" id="DB08231">
    <property type="generic name" value="Myristic acid"/>
</dbReference>
<dbReference type="DrugBank" id="DB00337">
    <property type="generic name" value="Pimecrolimus"/>
</dbReference>
<dbReference type="DrugBank" id="DB00864">
    <property type="generic name" value="Tacrolimus"/>
</dbReference>
<dbReference type="DrugBank" id="DB11693">
    <property type="generic name" value="Voclosporin"/>
</dbReference>
<dbReference type="DrugCentral" id="Q08209"/>
<dbReference type="DEPOD" id="PPP3CA"/>
<dbReference type="GlyGen" id="Q08209">
    <property type="glycosylation" value="2 sites, 1 O-linked glycan (2 sites)"/>
</dbReference>
<dbReference type="iPTMnet" id="Q08209"/>
<dbReference type="MetOSite" id="Q08209"/>
<dbReference type="PhosphoSitePlus" id="Q08209"/>
<dbReference type="SwissPalm" id="Q08209"/>
<dbReference type="BioMuta" id="PPP3CA"/>
<dbReference type="DMDM" id="1352673"/>
<dbReference type="jPOST" id="Q08209"/>
<dbReference type="MassIVE" id="Q08209"/>
<dbReference type="PaxDb" id="9606-ENSP00000378323"/>
<dbReference type="PeptideAtlas" id="Q08209"/>
<dbReference type="ProteomicsDB" id="2488"/>
<dbReference type="ProteomicsDB" id="58579">
    <molecule id="Q08209-1"/>
</dbReference>
<dbReference type="ProteomicsDB" id="58580">
    <molecule id="Q08209-2"/>
</dbReference>
<dbReference type="ProteomicsDB" id="58581">
    <molecule id="Q08209-3"/>
</dbReference>
<dbReference type="ProteomicsDB" id="88"/>
<dbReference type="Pumba" id="Q08209"/>
<dbReference type="Antibodypedia" id="2193">
    <property type="antibodies" value="595 antibodies from 45 providers"/>
</dbReference>
<dbReference type="DNASU" id="5530"/>
<dbReference type="Ensembl" id="ENST00000323055.10">
    <molecule id="Q08209-3"/>
    <property type="protein sequence ID" value="ENSP00000320580.6"/>
    <property type="gene ID" value="ENSG00000138814.17"/>
</dbReference>
<dbReference type="Ensembl" id="ENST00000394853.8">
    <molecule id="Q08209-2"/>
    <property type="protein sequence ID" value="ENSP00000378322.4"/>
    <property type="gene ID" value="ENSG00000138814.17"/>
</dbReference>
<dbReference type="Ensembl" id="ENST00000394854.8">
    <molecule id="Q08209-1"/>
    <property type="protein sequence ID" value="ENSP00000378323.3"/>
    <property type="gene ID" value="ENSG00000138814.17"/>
</dbReference>
<dbReference type="Ensembl" id="ENST00000512215.5">
    <molecule id="Q08209-4"/>
    <property type="protein sequence ID" value="ENSP00000422781.1"/>
    <property type="gene ID" value="ENSG00000138814.17"/>
</dbReference>
<dbReference type="GeneID" id="5530"/>
<dbReference type="KEGG" id="hsa:5530"/>
<dbReference type="MANE-Select" id="ENST00000394854.8">
    <property type="protein sequence ID" value="ENSP00000378323.3"/>
    <property type="RefSeq nucleotide sequence ID" value="NM_000944.5"/>
    <property type="RefSeq protein sequence ID" value="NP_000935.1"/>
</dbReference>
<dbReference type="UCSC" id="uc003hvu.3">
    <molecule id="Q08209-1"/>
    <property type="organism name" value="human"/>
</dbReference>
<dbReference type="AGR" id="HGNC:9314"/>
<dbReference type="CTD" id="5530"/>
<dbReference type="DisGeNET" id="5530"/>
<dbReference type="GeneCards" id="PPP3CA"/>
<dbReference type="HGNC" id="HGNC:9314">
    <property type="gene designation" value="PPP3CA"/>
</dbReference>
<dbReference type="HPA" id="ENSG00000138814">
    <property type="expression patterns" value="Tissue enhanced (brain)"/>
</dbReference>
<dbReference type="MalaCards" id="PPP3CA"/>
<dbReference type="MIM" id="114105">
    <property type="type" value="gene"/>
</dbReference>
<dbReference type="MIM" id="617711">
    <property type="type" value="phenotype"/>
</dbReference>
<dbReference type="MIM" id="618265">
    <property type="type" value="phenotype"/>
</dbReference>
<dbReference type="neXtProt" id="NX_Q08209"/>
<dbReference type="OpenTargets" id="ENSG00000138814"/>
<dbReference type="Orphanet" id="178469">
    <property type="disease" value="Autosomal dominant non-syndromic intellectual disability"/>
</dbReference>
<dbReference type="Orphanet" id="565858">
    <property type="disease" value="Craniosynostosis-microretrognathia-severe intellectual disability syndrome"/>
</dbReference>
<dbReference type="Orphanet" id="442835">
    <property type="disease" value="Non-specific early-onset epileptic encephalopathy"/>
</dbReference>
<dbReference type="PharmGKB" id="PA33678"/>
<dbReference type="VEuPathDB" id="HostDB:ENSG00000138814"/>
<dbReference type="eggNOG" id="KOG0375">
    <property type="taxonomic scope" value="Eukaryota"/>
</dbReference>
<dbReference type="GeneTree" id="ENSGT00940000156306"/>
<dbReference type="HOGENOM" id="CLU_962966_0_0_1"/>
<dbReference type="InParanoid" id="Q08209"/>
<dbReference type="OMA" id="YPAACNF"/>
<dbReference type="OrthoDB" id="5593063at2759"/>
<dbReference type="PAN-GO" id="Q08209">
    <property type="GO annotations" value="6 GO annotations based on evolutionary models"/>
</dbReference>
<dbReference type="PhylomeDB" id="Q08209"/>
<dbReference type="TreeFam" id="TF105557"/>
<dbReference type="BRENDA" id="3.1.3.16">
    <property type="organism ID" value="2681"/>
</dbReference>
<dbReference type="PathwayCommons" id="Q08209"/>
<dbReference type="Reactome" id="R-HSA-180024">
    <property type="pathway name" value="DARPP-32 events"/>
</dbReference>
<dbReference type="Reactome" id="R-HSA-2025928">
    <property type="pathway name" value="Calcineurin activates NFAT"/>
</dbReference>
<dbReference type="Reactome" id="R-HSA-2871809">
    <property type="pathway name" value="FCERI mediated Ca+2 mobilization"/>
</dbReference>
<dbReference type="Reactome" id="R-HSA-4086398">
    <property type="pathway name" value="Ca2+ pathway"/>
</dbReference>
<dbReference type="Reactome" id="R-HSA-5607763">
    <property type="pathway name" value="CLEC7A (Dectin-1) induces NFAT activation"/>
</dbReference>
<dbReference type="SignaLink" id="Q08209"/>
<dbReference type="SIGNOR" id="Q08209"/>
<dbReference type="BioGRID-ORCS" id="5530">
    <property type="hits" value="8 hits in 1176 CRISPR screens"/>
</dbReference>
<dbReference type="CD-CODE" id="FB4E32DD">
    <property type="entry name" value="Presynaptic clusters and postsynaptic densities"/>
</dbReference>
<dbReference type="ChiTaRS" id="PPP3CA">
    <property type="organism name" value="human"/>
</dbReference>
<dbReference type="EvolutionaryTrace" id="Q08209"/>
<dbReference type="GeneWiki" id="PPP3CA"/>
<dbReference type="GenomeRNAi" id="5530"/>
<dbReference type="Pharos" id="Q08209">
    <property type="development level" value="Tchem"/>
</dbReference>
<dbReference type="PRO" id="PR:Q08209"/>
<dbReference type="Proteomes" id="UP000005640">
    <property type="component" value="Chromosome 4"/>
</dbReference>
<dbReference type="RNAct" id="Q08209">
    <property type="molecule type" value="protein"/>
</dbReference>
<dbReference type="Bgee" id="ENSG00000138814">
    <property type="expression patterns" value="Expressed in Brodmann (1909) area 23 and 209 other cell types or tissues"/>
</dbReference>
<dbReference type="ExpressionAtlas" id="Q08209">
    <property type="expression patterns" value="baseline and differential"/>
</dbReference>
<dbReference type="GO" id="GO:0005955">
    <property type="term" value="C:calcineurin complex"/>
    <property type="evidence" value="ECO:0000314"/>
    <property type="project" value="UniProtKB"/>
</dbReference>
<dbReference type="GO" id="GO:0005737">
    <property type="term" value="C:cytoplasm"/>
    <property type="evidence" value="ECO:0000314"/>
    <property type="project" value="UniProtKB"/>
</dbReference>
<dbReference type="GO" id="GO:0005829">
    <property type="term" value="C:cytosol"/>
    <property type="evidence" value="ECO:0000318"/>
    <property type="project" value="GO_Central"/>
</dbReference>
<dbReference type="GO" id="GO:0043197">
    <property type="term" value="C:dendritic spine"/>
    <property type="evidence" value="ECO:0000314"/>
    <property type="project" value="UniProtKB"/>
</dbReference>
<dbReference type="GO" id="GO:0019897">
    <property type="term" value="C:extrinsic component of plasma membrane"/>
    <property type="evidence" value="ECO:0000305"/>
    <property type="project" value="ARUK-UCL"/>
</dbReference>
<dbReference type="GO" id="GO:0098978">
    <property type="term" value="C:glutamatergic synapse"/>
    <property type="evidence" value="ECO:0007669"/>
    <property type="project" value="Ensembl"/>
</dbReference>
<dbReference type="GO" id="GO:0005739">
    <property type="term" value="C:mitochondrion"/>
    <property type="evidence" value="ECO:0007669"/>
    <property type="project" value="Ensembl"/>
</dbReference>
<dbReference type="GO" id="GO:0005654">
    <property type="term" value="C:nucleoplasm"/>
    <property type="evidence" value="ECO:0000304"/>
    <property type="project" value="Reactome"/>
</dbReference>
<dbReference type="GO" id="GO:0005886">
    <property type="term" value="C:plasma membrane"/>
    <property type="evidence" value="ECO:0000314"/>
    <property type="project" value="UniProtKB"/>
</dbReference>
<dbReference type="GO" id="GO:0008287">
    <property type="term" value="C:protein serine/threonine phosphatase complex"/>
    <property type="evidence" value="ECO:0000303"/>
    <property type="project" value="ComplexPortal"/>
</dbReference>
<dbReference type="GO" id="GO:0042383">
    <property type="term" value="C:sarcolemma"/>
    <property type="evidence" value="ECO:0007669"/>
    <property type="project" value="UniProtKB-SubCell"/>
</dbReference>
<dbReference type="GO" id="GO:0098685">
    <property type="term" value="C:Schaffer collateral - CA1 synapse"/>
    <property type="evidence" value="ECO:0007669"/>
    <property type="project" value="Ensembl"/>
</dbReference>
<dbReference type="GO" id="GO:0030018">
    <property type="term" value="C:Z disc"/>
    <property type="evidence" value="ECO:0007669"/>
    <property type="project" value="UniProtKB-SubCell"/>
</dbReference>
<dbReference type="GO" id="GO:0051117">
    <property type="term" value="F:ATPase binding"/>
    <property type="evidence" value="ECO:0000353"/>
    <property type="project" value="ARUK-UCL"/>
</dbReference>
<dbReference type="GO" id="GO:0005509">
    <property type="term" value="F:calcium ion binding"/>
    <property type="evidence" value="ECO:0000303"/>
    <property type="project" value="UniProtKB"/>
</dbReference>
<dbReference type="GO" id="GO:0005516">
    <property type="term" value="F:calmodulin binding"/>
    <property type="evidence" value="ECO:0000314"/>
    <property type="project" value="UniProtKB"/>
</dbReference>
<dbReference type="GO" id="GO:0033192">
    <property type="term" value="F:calmodulin-dependent protein phosphatase activity"/>
    <property type="evidence" value="ECO:0000314"/>
    <property type="project" value="UniProtKB"/>
</dbReference>
<dbReference type="GO" id="GO:0019899">
    <property type="term" value="F:enzyme binding"/>
    <property type="evidence" value="ECO:0000314"/>
    <property type="project" value="UniProtKB"/>
</dbReference>
<dbReference type="GO" id="GO:0046983">
    <property type="term" value="F:protein dimerization activity"/>
    <property type="evidence" value="ECO:0000353"/>
    <property type="project" value="UniProtKB"/>
</dbReference>
<dbReference type="GO" id="GO:0004722">
    <property type="term" value="F:protein serine/threonine phosphatase activity"/>
    <property type="evidence" value="ECO:0000314"/>
    <property type="project" value="UniProtKB"/>
</dbReference>
<dbReference type="GO" id="GO:0097720">
    <property type="term" value="P:calcineurin-mediated signaling"/>
    <property type="evidence" value="ECO:0000315"/>
    <property type="project" value="UniProtKB"/>
</dbReference>
<dbReference type="GO" id="GO:0033173">
    <property type="term" value="P:calcineurin-NFAT signaling cascade"/>
    <property type="evidence" value="ECO:0000314"/>
    <property type="project" value="UniProtKB"/>
</dbReference>
<dbReference type="GO" id="GO:0006816">
    <property type="term" value="P:calcium ion transport"/>
    <property type="evidence" value="ECO:0007669"/>
    <property type="project" value="Ensembl"/>
</dbReference>
<dbReference type="GO" id="GO:0014898">
    <property type="term" value="P:cardiac muscle hypertrophy in response to stress"/>
    <property type="evidence" value="ECO:0007669"/>
    <property type="project" value="Ensembl"/>
</dbReference>
<dbReference type="GO" id="GO:0048813">
    <property type="term" value="P:dendrite morphogenesis"/>
    <property type="evidence" value="ECO:0007669"/>
    <property type="project" value="Ensembl"/>
</dbReference>
<dbReference type="GO" id="GO:0016311">
    <property type="term" value="P:dephosphorylation"/>
    <property type="evidence" value="ECO:0000304"/>
    <property type="project" value="UniProtKB"/>
</dbReference>
<dbReference type="GO" id="GO:0008544">
    <property type="term" value="P:epidermis development"/>
    <property type="evidence" value="ECO:0000250"/>
    <property type="project" value="UniProtKB"/>
</dbReference>
<dbReference type="GO" id="GO:0060079">
    <property type="term" value="P:excitatory postsynaptic potential"/>
    <property type="evidence" value="ECO:0007669"/>
    <property type="project" value="Ensembl"/>
</dbReference>
<dbReference type="GO" id="GO:0000082">
    <property type="term" value="P:G1/S transition of mitotic cell cycle"/>
    <property type="evidence" value="ECO:0007669"/>
    <property type="project" value="Ensembl"/>
</dbReference>
<dbReference type="GO" id="GO:0030216">
    <property type="term" value="P:keratinocyte differentiation"/>
    <property type="evidence" value="ECO:0000250"/>
    <property type="project" value="UniProtKB"/>
</dbReference>
<dbReference type="GO" id="GO:0050804">
    <property type="term" value="P:modulation of chemical synaptic transmission"/>
    <property type="evidence" value="ECO:0000250"/>
    <property type="project" value="UniProtKB"/>
</dbReference>
<dbReference type="GO" id="GO:0033555">
    <property type="term" value="P:multicellular organismal response to stress"/>
    <property type="evidence" value="ECO:0007669"/>
    <property type="project" value="Ensembl"/>
</dbReference>
<dbReference type="GO" id="GO:0110062">
    <property type="term" value="P:negative regulation of angiotensin-activated signaling pathway"/>
    <property type="evidence" value="ECO:0000314"/>
    <property type="project" value="UniProt"/>
</dbReference>
<dbReference type="GO" id="GO:1905949">
    <property type="term" value="P:negative regulation of calcium ion import across plasma membrane"/>
    <property type="evidence" value="ECO:0000303"/>
    <property type="project" value="ComplexPortal"/>
</dbReference>
<dbReference type="GO" id="GO:0050774">
    <property type="term" value="P:negative regulation of dendrite morphogenesis"/>
    <property type="evidence" value="ECO:0007669"/>
    <property type="project" value="Ensembl"/>
</dbReference>
<dbReference type="GO" id="GO:0010629">
    <property type="term" value="P:negative regulation of gene expression"/>
    <property type="evidence" value="ECO:0007669"/>
    <property type="project" value="Ensembl"/>
</dbReference>
<dbReference type="GO" id="GO:0023057">
    <property type="term" value="P:negative regulation of signaling"/>
    <property type="evidence" value="ECO:0000250"/>
    <property type="project" value="UniProtKB"/>
</dbReference>
<dbReference type="GO" id="GO:0070262">
    <property type="term" value="P:peptidyl-serine dephosphorylation"/>
    <property type="evidence" value="ECO:0000315"/>
    <property type="project" value="UniProtKB"/>
</dbReference>
<dbReference type="GO" id="GO:0042104">
    <property type="term" value="P:positive regulation of activated T cell proliferation"/>
    <property type="evidence" value="ECO:0000250"/>
    <property type="project" value="UniProtKB"/>
</dbReference>
<dbReference type="GO" id="GO:0070886">
    <property type="term" value="P:positive regulation of calcineurin-NFAT signaling cascade"/>
    <property type="evidence" value="ECO:0000303"/>
    <property type="project" value="ComplexPortal"/>
</dbReference>
<dbReference type="GO" id="GO:1905665">
    <property type="term" value="P:positive regulation of calcium ion import across plasma membrane"/>
    <property type="evidence" value="ECO:0000303"/>
    <property type="project" value="ComplexPortal"/>
</dbReference>
<dbReference type="GO" id="GO:1903235">
    <property type="term" value="P:positive regulation of calcium ion-dependent exocytosis of neurotransmitter"/>
    <property type="evidence" value="ECO:0000250"/>
    <property type="project" value="ARUK-UCL"/>
</dbReference>
<dbReference type="GO" id="GO:1903244">
    <property type="term" value="P:positive regulation of cardiac muscle hypertrophy in response to stress"/>
    <property type="evidence" value="ECO:0007669"/>
    <property type="project" value="Ensembl"/>
</dbReference>
<dbReference type="GO" id="GO:0045785">
    <property type="term" value="P:positive regulation of cell adhesion"/>
    <property type="evidence" value="ECO:0000315"/>
    <property type="project" value="ARUK-UCL"/>
</dbReference>
<dbReference type="GO" id="GO:0030335">
    <property type="term" value="P:positive regulation of cell migration"/>
    <property type="evidence" value="ECO:0000315"/>
    <property type="project" value="ARUK-UCL"/>
</dbReference>
<dbReference type="GO" id="GO:1905205">
    <property type="term" value="P:positive regulation of connective tissue replacement"/>
    <property type="evidence" value="ECO:0007669"/>
    <property type="project" value="Ensembl"/>
</dbReference>
<dbReference type="GO" id="GO:0045807">
    <property type="term" value="P:positive regulation of endocytosis"/>
    <property type="evidence" value="ECO:0007669"/>
    <property type="project" value="Ensembl"/>
</dbReference>
<dbReference type="GO" id="GO:0010628">
    <property type="term" value="P:positive regulation of gene expression"/>
    <property type="evidence" value="ECO:0007669"/>
    <property type="project" value="Ensembl"/>
</dbReference>
<dbReference type="GO" id="GO:0090193">
    <property type="term" value="P:positive regulation of glomerulus development"/>
    <property type="evidence" value="ECO:0000250"/>
    <property type="project" value="UniProtKB"/>
</dbReference>
<dbReference type="GO" id="GO:0045669">
    <property type="term" value="P:positive regulation of osteoblast differentiation"/>
    <property type="evidence" value="ECO:0000250"/>
    <property type="project" value="UniProtKB"/>
</dbReference>
<dbReference type="GO" id="GO:0045672">
    <property type="term" value="P:positive regulation of osteoclast differentiation"/>
    <property type="evidence" value="ECO:0000250"/>
    <property type="project" value="UniProtKB"/>
</dbReference>
<dbReference type="GO" id="GO:0046878">
    <property type="term" value="P:positive regulation of saliva secretion"/>
    <property type="evidence" value="ECO:0000250"/>
    <property type="project" value="UniProtKB"/>
</dbReference>
<dbReference type="GO" id="GO:0045944">
    <property type="term" value="P:positive regulation of transcription by RNA polymerase II"/>
    <property type="evidence" value="ECO:0000314"/>
    <property type="project" value="BHF-UCL"/>
</dbReference>
<dbReference type="GO" id="GO:0099170">
    <property type="term" value="P:postsynaptic modulation of chemical synaptic transmission"/>
    <property type="evidence" value="ECO:0007669"/>
    <property type="project" value="Ensembl"/>
</dbReference>
<dbReference type="GO" id="GO:0006470">
    <property type="term" value="P:protein dephosphorylation"/>
    <property type="evidence" value="ECO:0000314"/>
    <property type="project" value="UniProtKB"/>
</dbReference>
<dbReference type="GO" id="GO:0006606">
    <property type="term" value="P:protein import into nucleus"/>
    <property type="evidence" value="ECO:0007669"/>
    <property type="project" value="Ensembl"/>
</dbReference>
<dbReference type="GO" id="GO:0061006">
    <property type="term" value="P:regulation of cell proliferation involved in kidney morphogenesis"/>
    <property type="evidence" value="ECO:0000250"/>
    <property type="project" value="UniProtKB"/>
</dbReference>
<dbReference type="GO" id="GO:0097205">
    <property type="term" value="P:renal filtration"/>
    <property type="evidence" value="ECO:0000250"/>
    <property type="project" value="UniProtKB"/>
</dbReference>
<dbReference type="GO" id="GO:0051592">
    <property type="term" value="P:response to calcium ion"/>
    <property type="evidence" value="ECO:0000314"/>
    <property type="project" value="UniProtKB"/>
</dbReference>
<dbReference type="GO" id="GO:0048741">
    <property type="term" value="P:skeletal muscle fiber development"/>
    <property type="evidence" value="ECO:0000250"/>
    <property type="project" value="UniProtKB"/>
</dbReference>
<dbReference type="GO" id="GO:0043403">
    <property type="term" value="P:skeletal muscle tissue regeneration"/>
    <property type="evidence" value="ECO:0000304"/>
    <property type="project" value="BHF-UCL"/>
</dbReference>
<dbReference type="GO" id="GO:0042110">
    <property type="term" value="P:T cell activation"/>
    <property type="evidence" value="ECO:0000304"/>
    <property type="project" value="UniProtKB"/>
</dbReference>
<dbReference type="GO" id="GO:0014883">
    <property type="term" value="P:transition between fast and slow fiber"/>
    <property type="evidence" value="ECO:0007669"/>
    <property type="project" value="Ensembl"/>
</dbReference>
<dbReference type="GO" id="GO:0042060">
    <property type="term" value="P:wound healing"/>
    <property type="evidence" value="ECO:0000304"/>
    <property type="project" value="BHF-UCL"/>
</dbReference>
<dbReference type="CDD" id="cd07416">
    <property type="entry name" value="MPP_PP2B"/>
    <property type="match status" value="1"/>
</dbReference>
<dbReference type="DisProt" id="DP00092"/>
<dbReference type="FunFam" id="3.60.21.10:FF:000002">
    <property type="entry name" value="Serine/threonine-protein phosphatase"/>
    <property type="match status" value="1"/>
</dbReference>
<dbReference type="Gene3D" id="3.60.21.10">
    <property type="match status" value="1"/>
</dbReference>
<dbReference type="IDEAL" id="IID00069"/>
<dbReference type="InterPro" id="IPR004843">
    <property type="entry name" value="Calcineurin-like_PHP_ApaH"/>
</dbReference>
<dbReference type="InterPro" id="IPR029052">
    <property type="entry name" value="Metallo-depent_PP-like"/>
</dbReference>
<dbReference type="InterPro" id="IPR041751">
    <property type="entry name" value="MPP_PP2B"/>
</dbReference>
<dbReference type="InterPro" id="IPR043360">
    <property type="entry name" value="PP2B"/>
</dbReference>
<dbReference type="InterPro" id="IPR006186">
    <property type="entry name" value="Ser/Thr-sp_prot-phosphatase"/>
</dbReference>
<dbReference type="PANTHER" id="PTHR45673">
    <property type="entry name" value="SERINE/THREONINE-PROTEIN PHOSPHATASE 2B CATALYTIC SUBUNIT 1-RELATED"/>
    <property type="match status" value="1"/>
</dbReference>
<dbReference type="Pfam" id="PF00149">
    <property type="entry name" value="Metallophos"/>
    <property type="match status" value="1"/>
</dbReference>
<dbReference type="PRINTS" id="PR00114">
    <property type="entry name" value="STPHPHTASE"/>
</dbReference>
<dbReference type="SMART" id="SM00156">
    <property type="entry name" value="PP2Ac"/>
    <property type="match status" value="1"/>
</dbReference>
<dbReference type="SUPFAM" id="SSF56300">
    <property type="entry name" value="Metallo-dependent phosphatases"/>
    <property type="match status" value="1"/>
</dbReference>
<dbReference type="PROSITE" id="PS00125">
    <property type="entry name" value="SER_THR_PHOSPHATASE"/>
    <property type="match status" value="1"/>
</dbReference>